<keyword id="KW-1072">Activation of host autophagy by virus</keyword>
<keyword id="KW-0067">ATP-binding</keyword>
<keyword id="KW-1015">Disulfide bond</keyword>
<keyword id="KW-0255">Endonuclease</keyword>
<keyword id="KW-0269">Exonuclease</keyword>
<keyword id="KW-0347">Helicase</keyword>
<keyword id="KW-1035">Host cytoplasm</keyword>
<keyword id="KW-1043">Host membrane</keyword>
<keyword id="KW-0945">Host-virus interaction</keyword>
<keyword id="KW-0378">Hydrolase</keyword>
<keyword id="KW-1090">Inhibition of host innate immune response by virus</keyword>
<keyword id="KW-1092">Inhibition of host IRF3 by virus</keyword>
<keyword id="KW-1113">Inhibition of host RLR pathway by virus</keyword>
<keyword id="KW-0456">Lyase</keyword>
<keyword id="KW-0472">Membrane</keyword>
<keyword id="KW-0479">Metal-binding</keyword>
<keyword id="KW-0489">Methyltransferase</keyword>
<keyword id="KW-1127">Modulation of host ubiquitin pathway by viral deubiquitinase</keyword>
<keyword id="KW-1130">Modulation of host ubiquitin pathway by virus</keyword>
<keyword id="KW-0540">Nuclease</keyword>
<keyword id="KW-0547">Nucleotide-binding</keyword>
<keyword id="KW-0548">Nucleotidyltransferase</keyword>
<keyword id="KW-0645">Protease</keyword>
<keyword id="KW-0677">Repeat</keyword>
<keyword id="KW-0688">Ribosomal frameshifting</keyword>
<keyword id="KW-0694">RNA-binding</keyword>
<keyword id="KW-0696">RNA-directed RNA polymerase</keyword>
<keyword id="KW-0788">Thiol protease</keyword>
<keyword id="KW-0808">Transferase</keyword>
<keyword id="KW-0812">Transmembrane</keyword>
<keyword id="KW-1133">Transmembrane helix</keyword>
<keyword id="KW-0833">Ubl conjugation pathway</keyword>
<keyword id="KW-0899">Viral immunoevasion</keyword>
<keyword id="KW-0693">Viral RNA replication</keyword>
<keyword id="KW-0862">Zinc</keyword>
<keyword id="KW-0863">Zinc-finger</keyword>
<organism>
    <name type="scientific">Bat coronavirus 512/2005</name>
    <name type="common">BtCoV</name>
    <name type="synonym">BtCoV/512/2005</name>
    <dbReference type="NCBI Taxonomy" id="693999"/>
    <lineage>
        <taxon>Viruses</taxon>
        <taxon>Riboviria</taxon>
        <taxon>Orthornavirae</taxon>
        <taxon>Pisuviricota</taxon>
        <taxon>Pisoniviricetes</taxon>
        <taxon>Nidovirales</taxon>
        <taxon>Cornidovirineae</taxon>
        <taxon>Coronaviridae</taxon>
        <taxon>Orthocoronavirinae</taxon>
        <taxon>Alphacoronavirus</taxon>
        <taxon>Pedacovirus</taxon>
        <taxon>Alphacoronavirus scotophili</taxon>
    </lineage>
</organism>
<proteinExistence type="inferred from homology"/>
<comment type="function">
    <text>The replicase polyprotein of coronaviruses is a multifunctional protein: it contains the activities necessary for the transcription of negative stranded RNA, leader RNA, subgenomic mRNAs and progeny virion RNA as well as proteinases responsible for the cleavage of the polyprotein into functional products.</text>
</comment>
<comment type="function">
    <text evidence="1">The papain-like proteinase 1 (PLP1) and papain-like proteinase 2 (PLP2) are responsible for the cleavages located at the N-terminus of the replicase polyprotein. In addition, PLP2 possesses a deubiquitinating/deISGylating activity and processes both 'Lys-48'- and 'Lys-63'-linked polyubiquitin chains from cellular substrates. PLP2 also antagonizes innate immune induction of type I interferon by blocking the nuclear translocation of host IRF-3 (By similarity).</text>
</comment>
<comment type="function">
    <molecule>3C-like proteinase</molecule>
    <text evidence="9">Responsible for the majority of cleavages as it cleaves the C-terminus of replicase polyprotein at 11 sites. Recognizes substrates containing the core sequence [ILMVF]-Q-|-[SGACN]. Inhibited by the substrate-analog Cbz-Val-Asn-Ser-Thr-Leu-Gln-CMK. Also contains an ADP-ribose-1''-phosphate (ADRP)-binding function (By similarity).</text>
</comment>
<comment type="function">
    <text evidence="1">The helicase which contains a zinc finger structure displays RNA and DNA duplex-unwinding activities with 5' to 3' polarity. ATPase activity is strongly stimulated by poly(U), poly(dT), poly(C), poly(dA), but not by poly(G) (By similarity).</text>
</comment>
<comment type="function">
    <text evidence="1">The exoribonuclease acts on both ssRNA and dsRNA in a 3' to 5' direction.</text>
</comment>
<comment type="function">
    <text evidence="1">Nsp7-nsp8 hexadecamer may possibly confer processivity to the polymerase, maybe by binding to dsRNA or by producing primers utilized by the latter.</text>
</comment>
<comment type="function">
    <molecule>Viral protein genome-linked nsp9</molecule>
    <text evidence="3">Forms a primer, NSP9-pU, which is utilized by the polymerase for the initiation of RNA chains. Interacts with ribosome signal recognition particle RNA (SRP). Together with NSP8, suppress protein integration into the cell membrane, thereby disrupting host immune defenses.</text>
</comment>
<comment type="function">
    <molecule>RNA-directed RNA polymerase nsp12</molecule>
    <text evidence="3">RNA-directed RNA polymerase that catalyzes the transcription of viral genomic and subgenomic RNAs. Acts in complex with nsp7 and nsp8 to transcribe both the minus and positive strands of genomic RNA. The kinase-like NiRAN domain of NSP12 attaches one or more nucleotides to the amino terminus of NSP9, forming a covalent RNA-protein intermediate that serves as transcription/replication primer. Subgenomic RNAs (sgRNAs) are formed by discontinuous transcription: The polymerase has the ability to pause at transcription-regulating sequences (TRS) and jump to the leader TRS, resulting in a major deletion. This creates a series of subgenomic RNAs that are replicated, transcribed and translated. In addition, Nsp12 is a subunit of the viral RNA capping enzyme that catalyzes the RNA guanylyltransferase reaction for genomic and sub-genomic RNAs. Subsequently, the NiRAN domain transfers RNA to GDP, and forms the core cap structure GpppA-RNA.</text>
</comment>
<comment type="function">
    <molecule>Uridylate-specific endoribonuclease</molecule>
    <text evidence="2">Plays a role in viral transcription/replication and prevents the simultaneous activation of host cell dsRNA sensors, such as MDA5/IFIH1, OAS, and PKR (By similarity). Acts by degrading the 5'-polyuridines generated during replication of the poly(A) region of viral genomic and subgenomic RNAs. Catalyzes a two-step reaction in which a 2'3'-cyclic phosphate (2'3'-cP) is first generated by 2'-O transesterification, which is then hydrolyzed to a 3'-phosphate (3'-P) (By similarity). If not degraded, poly(U) RNA would hybridize with poly(A) RNA tails and activate host dsRNA sensors (By similarity).</text>
</comment>
<comment type="catalytic activity">
    <molecule>Non-structural protein 3</molecule>
    <reaction>
        <text>Thiol-dependent hydrolysis of ester, thioester, amide, peptide and isopeptide bonds formed by the C-terminal Gly of ubiquitin (a 76-residue protein attached to proteins as an intracellular targeting signal).</text>
        <dbReference type="EC" id="3.4.19.12"/>
    </reaction>
</comment>
<comment type="catalytic activity">
    <molecule>RNA-directed RNA polymerase nsp12</molecule>
    <reaction evidence="8">
        <text>RNA(n) + a ribonucleoside 5'-triphosphate = RNA(n+1) + diphosphate</text>
        <dbReference type="Rhea" id="RHEA:21248"/>
        <dbReference type="Rhea" id="RHEA-COMP:14527"/>
        <dbReference type="Rhea" id="RHEA-COMP:17342"/>
        <dbReference type="ChEBI" id="CHEBI:33019"/>
        <dbReference type="ChEBI" id="CHEBI:61557"/>
        <dbReference type="ChEBI" id="CHEBI:140395"/>
        <dbReference type="EC" id="2.7.7.48"/>
    </reaction>
</comment>
<comment type="catalytic activity">
    <molecule>Helicase</molecule>
    <reaction>
        <text>ATP + H2O = ADP + phosphate + H(+)</text>
        <dbReference type="Rhea" id="RHEA:13065"/>
        <dbReference type="ChEBI" id="CHEBI:15377"/>
        <dbReference type="ChEBI" id="CHEBI:15378"/>
        <dbReference type="ChEBI" id="CHEBI:30616"/>
        <dbReference type="ChEBI" id="CHEBI:43474"/>
        <dbReference type="ChEBI" id="CHEBI:456216"/>
        <dbReference type="EC" id="3.6.4.12"/>
    </reaction>
</comment>
<comment type="catalytic activity">
    <molecule>Helicase</molecule>
    <reaction>
        <text>ATP + H2O = ADP + phosphate + H(+)</text>
        <dbReference type="Rhea" id="RHEA:13065"/>
        <dbReference type="ChEBI" id="CHEBI:15377"/>
        <dbReference type="ChEBI" id="CHEBI:15378"/>
        <dbReference type="ChEBI" id="CHEBI:30616"/>
        <dbReference type="ChEBI" id="CHEBI:43474"/>
        <dbReference type="ChEBI" id="CHEBI:456216"/>
        <dbReference type="EC" id="3.6.4.13"/>
    </reaction>
</comment>
<comment type="catalytic activity">
    <molecule>RNA-directed RNA polymerase nsp12</molecule>
    <reaction evidence="3">
        <text>a 5'-end diphospho-ribonucleoside in mRNA + GTP + H(+) = a 5'-end (5'-triphosphoguanosine)-ribonucleoside in mRNA + diphosphate</text>
        <dbReference type="Rhea" id="RHEA:67012"/>
        <dbReference type="Rhea" id="RHEA-COMP:17165"/>
        <dbReference type="Rhea" id="RHEA-COMP:17166"/>
        <dbReference type="ChEBI" id="CHEBI:15378"/>
        <dbReference type="ChEBI" id="CHEBI:33019"/>
        <dbReference type="ChEBI" id="CHEBI:37565"/>
        <dbReference type="ChEBI" id="CHEBI:167616"/>
        <dbReference type="ChEBI" id="CHEBI:167617"/>
        <dbReference type="EC" id="2.7.7.50"/>
    </reaction>
    <physiologicalReaction direction="left-to-right" evidence="3">
        <dbReference type="Rhea" id="RHEA:67013"/>
    </physiologicalReaction>
</comment>
<comment type="catalytic activity">
    <molecule>Putative 2'-O-methyl transferase</molecule>
    <reaction evidence="2">
        <text>a 5'-end (N(7)-methyl 5'-triphosphoguanosine)-ribonucleoside in mRNA + S-adenosyl-L-methionine = a 5'-end (N(7)-methyl 5'-triphosphoguanosine)-(2'-O-methyl-ribonucleoside) in mRNA + S-adenosyl-L-homocysteine + H(+)</text>
        <dbReference type="Rhea" id="RHEA:67020"/>
        <dbReference type="Rhea" id="RHEA-COMP:17167"/>
        <dbReference type="Rhea" id="RHEA-COMP:17168"/>
        <dbReference type="ChEBI" id="CHEBI:15378"/>
        <dbReference type="ChEBI" id="CHEBI:57856"/>
        <dbReference type="ChEBI" id="CHEBI:59789"/>
        <dbReference type="ChEBI" id="CHEBI:156461"/>
        <dbReference type="ChEBI" id="CHEBI:167609"/>
        <dbReference type="EC" id="2.1.1.57"/>
    </reaction>
</comment>
<comment type="catalytic activity">
    <molecule>Uridylate-specific endoribonuclease</molecule>
    <reaction evidence="2">
        <text>uridylyl-uridylyl-ribonucleotide-RNA = a 3'-end uridylyl-2',3'-cyclophospho-uridine-RNA + a 5'-end dephospho-ribonucleoside-RNA</text>
        <dbReference type="Rhea" id="RHEA:67732"/>
        <dbReference type="Rhea" id="RHEA-COMP:13936"/>
        <dbReference type="Rhea" id="RHEA-COMP:17334"/>
        <dbReference type="Rhea" id="RHEA-COMP:17335"/>
        <dbReference type="ChEBI" id="CHEBI:138284"/>
        <dbReference type="ChEBI" id="CHEBI:173079"/>
        <dbReference type="ChEBI" id="CHEBI:173080"/>
    </reaction>
</comment>
<comment type="cofactor">
    <molecule>Uridylate-specific endoribonuclease</molecule>
    <cofactor evidence="2">
        <name>Mn(2+)</name>
        <dbReference type="ChEBI" id="CHEBI:29035"/>
    </cofactor>
    <text evidence="2">Likely affects Nsp15 binding to RNA.</text>
</comment>
<comment type="subunit">
    <text evidence="1">3CL-PRO exists as monomer and homodimer. Eight copies of nsp7 and eight copies of nsp8 assemble to form a heterohexadecamer. Nsp9 is a dimer. Nsp10 forms a dodecamer (By similarity).</text>
</comment>
<comment type="subcellular location">
    <molecule>Non-structural protein 3</molecule>
    <subcellularLocation>
        <location evidence="31">Host membrane</location>
        <topology evidence="31">Multi-pass membrane protein</topology>
    </subcellularLocation>
</comment>
<comment type="subcellular location">
    <molecule>Non-structural protein 4</molecule>
    <subcellularLocation>
        <location evidence="31">Host membrane</location>
        <topology evidence="31">Multi-pass membrane protein</topology>
    </subcellularLocation>
</comment>
<comment type="subcellular location">
    <molecule>Non-structural protein 6</molecule>
    <subcellularLocation>
        <location evidence="31">Host membrane</location>
        <topology evidence="31">Multi-pass membrane protein</topology>
    </subcellularLocation>
</comment>
<comment type="subcellular location">
    <molecule>Non-structural protein 7</molecule>
    <subcellularLocation>
        <location evidence="1">Host cytoplasm</location>
        <location evidence="1">Host perinuclear region</location>
    </subcellularLocation>
    <text evidence="1">nsp7, nsp8, nsp9 and nsp10 are localized in cytoplasmic foci, largely perinuclear. Late in infection, they merge into confluent complexes (By similarity).</text>
</comment>
<comment type="subcellular location">
    <molecule>Non-structural protein 8</molecule>
    <subcellularLocation>
        <location evidence="1">Host cytoplasm</location>
        <location evidence="1">Host perinuclear region</location>
    </subcellularLocation>
    <text evidence="1">nsp7, nsp8, nsp9 and nsp10 are localized in cytoplasmic foci, largely perinuclear. Late in infection, they merge into confluent complexes (By similarity).</text>
</comment>
<comment type="subcellular location">
    <molecule>Viral protein genome-linked nsp9</molecule>
    <subcellularLocation>
        <location evidence="1">Host cytoplasm</location>
        <location evidence="1">Host perinuclear region</location>
    </subcellularLocation>
    <text evidence="1">nsp7, nsp8, nsp9 and nsp10 are localized in cytoplasmic foci, largely perinuclear. Late in infection, they merge into confluent complexes (By similarity).</text>
</comment>
<comment type="subcellular location">
    <molecule>Non-structural protein 10</molecule>
    <subcellularLocation>
        <location evidence="1">Host cytoplasm</location>
        <location evidence="1">Host perinuclear region</location>
    </subcellularLocation>
    <text evidence="1">nsp7, nsp8, nsp9 and nsp10 are localized in cytoplasmic foci, largely perinuclear. Late in infection, they merge into confluent complexes (By similarity).</text>
</comment>
<comment type="subcellular location">
    <molecule>Helicase</molecule>
    <subcellularLocation>
        <location evidence="31">Host endoplasmic reticulum-Golgi intermediate compartment</location>
    </subcellularLocation>
    <text evidence="1">The helicase interacts with the N protein in membranous complexes and colocalizes with sites of synthesis of new viral RNA.</text>
</comment>
<comment type="subcellular location">
    <molecule>Uridylate-specific endoribonuclease</molecule>
    <subcellularLocation>
        <location evidence="1">Host cytoplasm</location>
        <location evidence="1">Host perinuclear region</location>
    </subcellularLocation>
</comment>
<comment type="alternative products">
    <event type="ribosomal frameshifting"/>
    <isoform>
        <id>P0C6W0-1</id>
        <name>Replicase polyprotein 1ab</name>
        <name>pp1ab</name>
        <sequence type="displayed"/>
    </isoform>
    <isoform>
        <id>P0C6F6-1</id>
        <name>Replicase polyprotein 1a</name>
        <name>pp1a</name>
        <name>ORF1a polyprotein</name>
        <sequence type="external"/>
    </isoform>
</comment>
<comment type="domain">
    <text evidence="1">The hydrophobic domains (HD) could mediate the membrane association of the replication complex and thereby alter the architecture of the host cell membrane.</text>
</comment>
<comment type="PTM">
    <text evidence="1">Specific enzymatic cleavages in vivo by its own proteases yield mature proteins. 3CL-PRO and PL-PRO proteinases are autocatalytically processed (By similarity).</text>
</comment>
<comment type="miscellaneous">
    <text>Bat coronavirus 512/2005 is highly similar to porcine epidemic diarrhea virus (PEDV).</text>
</comment>
<comment type="miscellaneous">
    <molecule>Isoform Replicase polyprotein 1ab</molecule>
    <text>Produced by -1 ribosomal frameshifting at the 1a-1b genes boundary.</text>
</comment>
<comment type="similarity">
    <text evidence="31">Belongs to the coronaviruses polyprotein 1ab family.</text>
</comment>
<gene>
    <name type="primary">rep</name>
    <name type="ORF">1a-1b</name>
</gene>
<sequence>MASNHISLAFANDEEISAIGFGSVEEAVSYYSDAAVNGFDQCRFVSLGLQDAVVGVEDDDVVMLITGVTQLRAYLGTFGDRPLNLRGWLLFSNCNYFLEELDLVFGRCGGTTIPVDQFMCGADGAPVIQEGDWTFMDYFQDSNQFTLNGITYVKAWDVDRKPNDYAKQNVTCIRRITYITDHRHVLADGTTMKTARHPKVNKSVVLDSPFDQIYKEVGSPFMGNGSTFVEMLKDPAFFHALITCECGRSEWTVGDWKGYNSLCCNIKCKPITIVTPKAVPGAVVITKAGIGAGLKCYNNVFLKHIIDLVVPGTNLGWGVWRIAKVQSKDDVATSGNVLVDDPEDRLDPCYFGNDGPFATKFKFQLLANSFDDEVKGAIVQGVVHVNTAICDVVKDILGLPWFVKKLGSLVTVMWDQFVAGVQSMKICTLKVVQLAKALSCATMSVVKGVITLVAEVPEIFKRLFYTLTSALKSLCTSSCDALVVAGKSFAKIGDYVLLPSALVRLVSSKVKGKAQSGIKQLQFATVVLGDTHKVESDRVEFSSVNLKMVDEEFPLNPVGHTVAVGNQAFFCSDGLYRFMADRDLVITSPIFKPELELEPIFECDAIPGFPKVAASNVAELCVKVDTLLFNYDKIYKKYSTIIKGDRCYIQCTHTFKAPSYYFDDDEFVELCTKYYKLPDFDAFYNAVHAATDMDQFCALCTSGFEVFIPRVPDCPPILNDIDGGSIWTSFILSVRSATDFIKTLKIDLGLNGVVVFVTKKFRKAGALLQKLYNAFLDTVTSFIKVAGVAFKYCATCVPKIVINGCYHTVTRLFAKDLQIPTEDGVADFNTFNHCVFPVNPTRIETDSLELEEVDFVEPGVDGKLVILDDYSFYSDGTNYYPSDGKGVVASCFKKKGGGVVTISDEVQVRTIDPVYKVRLEYEFEDETLVKVCEKAIGTKLKVTGDWSNLLETLEKAMDVVRQHLDVPDYFVYDEEGGTDLNLTIMVSQWPLSSDSEDDFKAVDDEPNANTDETVDTFAEDVAETQNVQQDVTQDEVEAVCDLVVKATEEGPIEHEELSEDQKEVQQALAFIEDKPVVVKPDVFAFSYASYGGLKVLNQSSNNCWVSSALVQLQLTGLLDSDEMQLFNAGRVSPMVKRCYESQRAIFGSLGDVSACLESLLKDRDGMSITCTIDCGCGPGVRVYENAIFRFTPLKTAFPMGRCLICSKTLMHTITQMKGTGIFCRDATALDVDTLVVKPLCAAVYVGAQDGGHYLTNMYDANMAVDGHGRHPIKFNTINTLCYKDVDWEVSNGSCDVKPFLTYKNIEFYQGELSALLSVNHDFVVNAANEQLSHGGGIAKALDDLTKGELQVLSNQYVSRNGSIKVGSGVLIKCKEHSILNVVGPRKGKHAAELLTKAYTFVFKQKGVPLMPLLSVGIFKVPITESLAAFLACVGDRVCKCFCYTDKERLAIQNFVTSFQTEQPVEPLPVIQEVKGVQLEKPVPDVKVENPCEPFRIEGDAKFYDLTPSMVQSLQVTRLVSFTNSDLCLGSFVRDCDGYVQGSLGGAIANYKKSNPVLPAGNCVTLKCDGFISFTFVILPKEGDTNYEKNFNRAIAKFLKLKGSLLVVVEDSSVFNKISHASVAGYVAKPALVDTLFEAKPVQVVVTQDQRSFHTVELSTSQTYGQQLGDCVVEDKKVTNLKPVSKDKVVSVVPNVDWDKHYGFVDAGIFHTLDHTMFVFDNNVVNGKRVLRTSDNNCWINAVCLQLQFANAKFKPKGLQQLWESYCTGDVAMFVHWLYWITGVEKGEPSDAENTLNIISRFLKPQGSVEMLRATSTTCDGTCSTKRVVSTPVVNASVLKVGLDDGNCVHGLPLVDRVVSVNGTVIITNVGDTPGKPVVATENLLLDGVSYTVFQDSTTGVGHYTVFDKEAKLMFDGDVLKPCDLNVSPVTSVVVCNNKKIVVQDPVKRVELDASKFLDTMNVASEKFFTFGDFVSRNIIVLIVYLFSLLAICFRALKKRDMKVMAGVPERTGIILKRSVKYNYKALKFFFRLKFQYIKVFLKFSLVLYTLYALMFMFIRFTPVGTPICKRYTDGYANSTFDKNDYCGNVLCKICLYGYEELSDFTHTRVIWQHLKDPLIGNILPLFYLVFLIIFGGFFVRIGITYFIMQYINAAGVALGYQDNVWLLHLLPFNSMGNIIVVAFIVTRILLFLKHVLFGCDKPSCIACSKSAKLTRVPLQTILQGVTKSFYVNANGGKKFCKKHNFFCVDCDSYGYGCTFINDVIAPELSNVTKLNVIPTGPATIIIDKVEFSNGFYYLYSGSTFWKYNFDITEAKYACKDVLKNCNILTDFVVFNNSGSNVTQVKNACVYFSQLLCKPIKLVDSALLASLNVDFSANLHKAFVEVLSNSFGKDLSNCSNMNECRESLGLSDVPEEEFSAAVSEAHRYDVLISDVSFNNLIVSYAKPEEKLAVHDIANCMRVGAKVVNHNVLTKDNVPVVWLAKDFIALSEEARKYIVRTTKTKGINFMLTFNDRRMHLTIPTISVANKKGAGLPSLFTRLYSFFWHLCVLIVVLFVATSLLDFSAQVTSDTQYDFKYIENGVLKVFEKPLDCVHNAFVNFNEWHNAKFGSIPTNSRRCPIVVGTSDEVRYIPGVPAGVFLYGKSLIFAMSTIFGTSGLCFDDRGLTDPDSCIFNSACTTLSGIGGRNVYCYREGVVDNAKLYSSLLPHSYYRLMDGNHIVLPEIITRGFGIRTIKTQAMTYCRTGECIDSQAGVCVGLDRFFVYSKTPGSDYVCGTGFFSLLFNVIGMFSNSIPVTVMSGQILLNCVVAFTAVMACFAFTKFKRLFGDMSFGVLSVGLCTVVNNLSYVVTQNSIGMLAYATLYFLCTKGVRYSWVWHVGFAISYCFLAPWWVVLAYLICALLEFLPNLFKLKVSTQLFEGDKFVGSFESAASGTFVLDMHSYQKLANSISTEKLKQYCASYNRYKYYSGSASEADYRLACFAHLAKAMSDFANDHMDKLYTPPTVSYNSTLQAGLRKMAQPSGIVEGCIVRVSYGNLTLNGLWLGDTVICPRHVIASNTTNVIDYDHAMSLVRLHNFSISSGNMFLGVISASMRGTLLHIKVNQSNVNTPNYTYKVLKPGDSFNILACYDGSAAGVYGVNMRTNYTIRGSFISGACGSPGYNINNGVVEFCYMHHLELGSGCHVGSDMDGTMYGKYEDQPTLQIEGASNLVTENVCSWLYGALINGDRWWLSSVSVGVDTYNEWALRNGMTALKNVDCFSLLVAKTGVDVGRLLASIQKLHGNFGGKSILGCTSLCDEFTLSEVVKQMYGVTLQSGKVSRAFRNASIVCCLLFLFLSEMLNHSKLFWINPGYITPVFLAIIVASSALMLLVKHKLLFLQLYLLPSLCIVSGYNIFKDYHFYTYMLEEFDYKVPFGGFNVTGVLNISLCCFVMGLHTFRFLQTPNKIFSYVVAVLTVLYTYYYSTDVLGLILTSMSGFTNYWFIGTATYKLATYVLPHTSLLDSFDAIKAVVFLYLLLGYCNCVYYGSLYWINRFCKLTLGCYEFKVSAAEFKYMVANGLRAPTGVFDALILSLKLIGVGGRKTIKISSVQSKLTDLKCTNVVLLGCLSNMNIAANSREWAYCVDLHNKINLCNDAEAAQEMLLALLAFFLSKNSAFGVDELLDSYFNDSSVLQSVAATYVNLPSYLAYETARQSYEDALANGSPPQLVKQLRHAMNVAKSEFDREASTQRKLDRMAEQAASQMYKEARAVNRKSKVVSAMHSLLFGMLRRLDMSSVDTILSLAKDGVVPLSIIPAVSATKLNIVVSDIESYSKIQREGCVHYAGVIWSVVDIKDNDGKPVHAKEVVTSNVESLAWPLFLNCERIIKLQNNEIIPSKIKQRPIKAEGEGVVADGNALYSNEGGRTFMYAFISDKPDLKVVKWEFDGGSNAIELEPPCKFLVEAPSGPVVKYLYFVRNLNNLRRGAVLGFIGATVRLQAGKQTEQATNSSLLTLCAFAVDPPKTYLDAVKSGHRPVGNCVKMLANGSGNGQAITNGVEASTNQDSYGGASVCLYCRAHVEHPDMDGFCKLRGKYVQVPLGTLDPIRFVLENTVCKVCGCWQANGCTCDRAVIQSVDSGYLNRVRGSSAARLEPLNGSDTHHVFRAFDVYNRDVACISKFLKVNCVRLKNLDKHDAFWIVKKCTKSVMEHEQSIYNLISDCGAVAKHDFFTWKEGRSVYGNVCRQDLTEYTMMDLCYALRNFDENNCETLKKILVVVGACDESYFDNKLWFDPVENEDVHRVYAKLGTIVARAMLKCVKYCDAMVEQGIVGVITLDNQDLNGDFYDFGDFVTSVKGMGVPICTSYYSYMMPVMGMTNCLASECFIKSDIFGEDFRTFDLLAYDFTEHKVNLFNKYFKHWGQTYHPNCEDCHDESCIVHCANFNTLFATTIPITAFGPLCRKCWIDGVPLVTTAGYHFKQLGIVWNKDLNLHSSRLTINELLQFCADPSLLIASSPALVDKRTVCFSVAALGTGMTNQTVKPGHFNREFYDFLRSQGFFEEGSELTLKHFFFAQKGDAAVRDFDYYRYNRTTVLDICQARVVYQIVQCYFGMYEGGCITAKEVIVNNLNKSAGYPFNKFGKAGLYYDSLSYEEQDDLYAYTKRNIIPTMTQLNLKYAISGKDRARTVGGVSLLSTMTTRQYHQKHLKSIVNTRGASVVIGTTKFYGGWDNMLKTLIKDVENPHLMGWDYPKCDRALPNMIRMISAMILGSKHVNCCSSSDRYYRLCNELAQVLTEMVYSNGGFYVKPGGTTSGDATTAYANSVFNIFQATSANVNRLLSVDSNTCNNIEVKQLQRKLYDCCYRSSSVDQSFVEEYFGYLRKHFSMMILSDDGVVCYNSEYAALGYVADLNAFKAVLYYQNNVFMSASKCWIEPDINKGPHEFCSQHTMQIVDKDGTYYLPYPDPSRILSAGVFVDDIVKTDPVILLERYVSLAIDAYPLSKHDNPEYRRVFTVMLDWVKHLYKTLNQGVLDSFSVTLLEDATAKFWDESFYASMYEQSSVLQSAGLCVVCSSQTVLRCGDCIRRPMLCTKCAYDHVVSTSHKFILAITPYVCCSSGCGVSDVTKLYLGGLSYWCVDHKPRLSFPLCSSGNVFGLYKNSATGSPDVDDFNTLATSDWTDVKDYKLANDVKDSLRLFAAETIKAKEESVKSSYACATIHEVVGPKELVLKWEVGKPRPPLSRNSVFTCYHITKNTKFQVGEFTFEKLDYDNDAVSYKSTATTKLVPGMVFVLTSHNVQPLRAPTIINQERYSTLHKLRPAFNIHEDYSNLIPYYQLIGKQKLTTIQGPPGSGKSHCVIGLGLYFPGARIVFTACSHAAVDSLCVKAATAYSSDRCSRIIPQKARIECYDGFKSNNTSAQYLFSTVNALPEVNADICVVDEVSMCTNYDLSVINQRVNYRHIVYVGDPQQLPAPRVMITRGVLVPEDYNVVTRRMCVLKPDIFLHKCYRCPAEIVNTVSEMVYENQFVPVKSESKECFKIYCRGNVQVDNGSSINRRQLEVVRMFLAKNPKWAKAVFISPYNSQNYVAGRVLGLQIQTVDSSQGSEYDYVIYTQTSDTAHASNVNRFNVAITRAKKGILCIMCDRELFDILKFYELKLSDLQVGDGCGLFKDCYKGEDNLPPSHAPTFMSLSDNFKTDKDLAVQIGVNGPVKYEHVISFMGFRFDINVPNQHTLFCTRDFAMRNARGWLGFDVEGAHVIGSNVGTNVPLQLGFSNGVDFVVRPEGCVSTEVGDVIQPVRARAPPGDQFTHLLPLLRKGQPWSVIRRRIVQMCSDYLANLSDTLIFVLWSGGLELTTMRYFVKLGPVQTCDCGKRATCYNSTNHTFSCFRHALGSDYIYNCYCIDIQQWGYTGSLSMNHHEVCNIHRNEHVASGDAAMTRCLAIHDCFVKNVDWSITYPFIANEQAINKSGRLVQSHVMRAVLKLYNPKAIHDVGNPKGIRCVVTDASWYCYDKNPTNTNVKMLEYDYITHGQLDGLCLFWNCNVDMYPEFSVVCRFDTRMRSTLNLEGCNGGSLYVNNHAFHTPAYDKRAFAKLKAMPFFFYDDSECEKLQDAVNYVPLRASNCITRCNVGGAVCSKHCALYHNYVMAYNTFTTAGFTIWVPNSFDMFNLWQTFKNSNVQGLENIAYNVVKKGSFVGVEGELPVAVVNDKVMVRDGVSDNVVFVNNTSLPTNVAFELYAKRKVGLTPPLTILKNLGVVCTSKCVLWDYEASRPLTTFTKDVCKYTDFDGDVCTLFDNSVPGAFERFTVTKNAVLISLTAVKKLTAIKLTYGYLNGVPVFTHEDKPFTWYIYTRKDGAFVEYPDGYFTQGRVISDFQPRSNMEEDFLNMDMGLFISKYGLEDYGFEHVVFGDVSKTTLGGLHLLISQIRLSKIGVLKVEDFVSSSDSTLKSCTVTYVDNPSSKMVCTYVDLLLDDFVNILKSVDLSVVSKVHEVVIDCKVWRWMLWCKDHKVQTFYPQLQSAEWKCGYSMPSIYKIQRMCLEPCNLYNYGSGLKLPDGIMFNVVKYTQLCQYLNSTTMCVPHHMRVLHLGAGSDKGVAPGTAVLRRWLPLDAVIVDNDVNDYVSDADFSYTGDCASMYLTDKFDLVISDMYDGRTKSCDGDNVSKEGFFPYINGVITEKLALGGTVAIKITEFSWNKKLYELIQKFEYWTLFCTSVNTSSSEAFLIGVHFLGDFSTNAIIDGNIMHANYIFWRNSTIMTMSYNSVLDLSKFSCKHKATVVVNLKDSSVTDLVLGLLKNGKLLIRNNGVVCGFSNHLVNSTK</sequence>
<accession>P0C6W0</accession>
<accession>Q0Q467</accession>
<reference key="1">
    <citation type="journal article" date="2006" name="J. Virol.">
        <title>Prevalence and genetic diversity of coronaviruses in bats from China.</title>
        <authorList>
            <person name="Tang X.C."/>
            <person name="Zhang J.X."/>
            <person name="Zhang S.Y."/>
            <person name="Wang P."/>
            <person name="Fan X.H."/>
            <person name="Li L.F."/>
            <person name="Li G."/>
            <person name="Dong B.Q."/>
            <person name="Liu W."/>
            <person name="Cheung C.L."/>
            <person name="Xu K.M."/>
            <person name="Song W.J."/>
            <person name="Vijaykrishna D."/>
            <person name="Poon L.L.M."/>
            <person name="Peiris J.S.M."/>
            <person name="Smith G.J."/>
            <person name="Chen H."/>
            <person name="Guan Y."/>
        </authorList>
    </citation>
    <scope>NUCLEOTIDE SEQUENCE [GENOMIC RNA]</scope>
</reference>
<evidence type="ECO:0000250" key="1"/>
<evidence type="ECO:0000250" key="2">
    <source>
        <dbReference type="UniProtKB" id="P0C6X7"/>
    </source>
</evidence>
<evidence type="ECO:0000250" key="3">
    <source>
        <dbReference type="UniProtKB" id="P0DTD1"/>
    </source>
</evidence>
<evidence type="ECO:0000255" key="4"/>
<evidence type="ECO:0000255" key="5">
    <source>
        <dbReference type="PROSITE-ProRule" id="PRU00214"/>
    </source>
</evidence>
<evidence type="ECO:0000255" key="6">
    <source>
        <dbReference type="PROSITE-ProRule" id="PRU00444"/>
    </source>
</evidence>
<evidence type="ECO:0000255" key="7">
    <source>
        <dbReference type="PROSITE-ProRule" id="PRU00490"/>
    </source>
</evidence>
<evidence type="ECO:0000255" key="8">
    <source>
        <dbReference type="PROSITE-ProRule" id="PRU00539"/>
    </source>
</evidence>
<evidence type="ECO:0000255" key="9">
    <source>
        <dbReference type="PROSITE-ProRule" id="PRU00772"/>
    </source>
</evidence>
<evidence type="ECO:0000255" key="10">
    <source>
        <dbReference type="PROSITE-ProRule" id="PRU00986"/>
    </source>
</evidence>
<evidence type="ECO:0000255" key="11">
    <source>
        <dbReference type="PROSITE-ProRule" id="PRU01291"/>
    </source>
</evidence>
<evidence type="ECO:0000255" key="12">
    <source>
        <dbReference type="PROSITE-ProRule" id="PRU01292"/>
    </source>
</evidence>
<evidence type="ECO:0000255" key="13">
    <source>
        <dbReference type="PROSITE-ProRule" id="PRU01293"/>
    </source>
</evidence>
<evidence type="ECO:0000255" key="14">
    <source>
        <dbReference type="PROSITE-ProRule" id="PRU01294"/>
    </source>
</evidence>
<evidence type="ECO:0000255" key="15">
    <source>
        <dbReference type="PROSITE-ProRule" id="PRU01295"/>
    </source>
</evidence>
<evidence type="ECO:0000255" key="16">
    <source>
        <dbReference type="PROSITE-ProRule" id="PRU01296"/>
    </source>
</evidence>
<evidence type="ECO:0000255" key="17">
    <source>
        <dbReference type="PROSITE-ProRule" id="PRU01297"/>
    </source>
</evidence>
<evidence type="ECO:0000255" key="18">
    <source>
        <dbReference type="PROSITE-ProRule" id="PRU01298"/>
    </source>
</evidence>
<evidence type="ECO:0000255" key="19">
    <source>
        <dbReference type="PROSITE-ProRule" id="PRU01299"/>
    </source>
</evidence>
<evidence type="ECO:0000255" key="20">
    <source>
        <dbReference type="PROSITE-ProRule" id="PRU01300"/>
    </source>
</evidence>
<evidence type="ECO:0000255" key="21">
    <source>
        <dbReference type="PROSITE-ProRule" id="PRU01303"/>
    </source>
</evidence>
<evidence type="ECO:0000255" key="22">
    <source>
        <dbReference type="PROSITE-ProRule" id="PRU01305"/>
    </source>
</evidence>
<evidence type="ECO:0000255" key="23">
    <source>
        <dbReference type="PROSITE-ProRule" id="PRU01306"/>
    </source>
</evidence>
<evidence type="ECO:0000255" key="24">
    <source>
        <dbReference type="PROSITE-ProRule" id="PRU01307"/>
    </source>
</evidence>
<evidence type="ECO:0000255" key="25">
    <source>
        <dbReference type="PROSITE-ProRule" id="PRU01333"/>
    </source>
</evidence>
<evidence type="ECO:0000255" key="26">
    <source>
        <dbReference type="PROSITE-ProRule" id="PRU01334"/>
    </source>
</evidence>
<evidence type="ECO:0000255" key="27">
    <source>
        <dbReference type="PROSITE-ProRule" id="PRU01335"/>
    </source>
</evidence>
<evidence type="ECO:0000255" key="28">
    <source>
        <dbReference type="PROSITE-ProRule" id="PRU01336"/>
    </source>
</evidence>
<evidence type="ECO:0000255" key="29">
    <source>
        <dbReference type="PROSITE-ProRule" id="PRU01337"/>
    </source>
</evidence>
<evidence type="ECO:0000255" key="30">
    <source>
        <dbReference type="PROSITE-ProRule" id="PRU01344"/>
    </source>
</evidence>
<evidence type="ECO:0000305" key="31"/>
<name>R1AB_BC512</name>
<protein>
    <recommendedName>
        <fullName>Replicase polyprotein 1ab</fullName>
        <shortName>pp1ab</shortName>
    </recommendedName>
    <alternativeName>
        <fullName>ORF1ab polyprotein</fullName>
    </alternativeName>
    <component>
        <recommendedName>
            <fullName>Non-structural protein 1</fullName>
            <shortName>nsp1</shortName>
        </recommendedName>
        <alternativeName>
            <fullName>p9</fullName>
        </alternativeName>
    </component>
    <component>
        <recommendedName>
            <fullName>Non-structural protein 2</fullName>
            <shortName>nsp2</shortName>
        </recommendedName>
        <alternativeName>
            <fullName>p87</fullName>
        </alternativeName>
    </component>
    <component>
        <recommendedName>
            <fullName>Non-structural protein 3</fullName>
            <shortName>nsp3</shortName>
            <ecNumber>3.4.19.12</ecNumber>
            <ecNumber>3.4.22.-</ecNumber>
        </recommendedName>
        <alternativeName>
            <fullName>PL1-PRO/PL2-PRO</fullName>
        </alternativeName>
        <alternativeName>
            <fullName>PLP1/PLP2</fullName>
        </alternativeName>
        <alternativeName>
            <fullName>Papain-like proteinases 1/2</fullName>
        </alternativeName>
        <alternativeName>
            <fullName>p195</fullName>
        </alternativeName>
    </component>
    <component>
        <recommendedName>
            <fullName>Non-structural protein 4</fullName>
            <shortName>nsp4</shortName>
        </recommendedName>
        <alternativeName>
            <fullName>Peptide HD2</fullName>
        </alternativeName>
    </component>
    <component>
        <recommendedName>
            <fullName>3C-like proteinase</fullName>
            <shortName>3CL-PRO</shortName>
            <shortName>3CLp</shortName>
            <ecNumber>3.4.22.-</ecNumber>
        </recommendedName>
        <alternativeName>
            <fullName>M-PRO</fullName>
        </alternativeName>
        <alternativeName>
            <fullName>nsp5</fullName>
        </alternativeName>
        <alternativeName>
            <fullName>p34</fullName>
        </alternativeName>
    </component>
    <component>
        <recommendedName>
            <fullName>Non-structural protein 6</fullName>
            <shortName>nsp6</shortName>
        </recommendedName>
    </component>
    <component>
        <recommendedName>
            <fullName>Non-structural protein 7</fullName>
            <shortName>nsp7</shortName>
        </recommendedName>
        <alternativeName>
            <fullName>p5</fullName>
        </alternativeName>
    </component>
    <component>
        <recommendedName>
            <fullName>Non-structural protein 8</fullName>
            <shortName>nsp8</shortName>
        </recommendedName>
        <alternativeName>
            <fullName>p23</fullName>
        </alternativeName>
    </component>
    <component>
        <recommendedName>
            <fullName>Viral protein genome-linked nsp9</fullName>
        </recommendedName>
        <alternativeName>
            <fullName>Non-structural protein 9</fullName>
            <shortName>nsp9</shortName>
        </alternativeName>
        <alternativeName>
            <fullName>RNA-capping enzyme subunit nsp9</fullName>
        </alternativeName>
    </component>
    <component>
        <recommendedName>
            <fullName>Non-structural protein 10</fullName>
            <shortName>nsp10</shortName>
        </recommendedName>
        <alternativeName>
            <fullName>Growth factor-like peptide</fullName>
            <shortName>GFL</shortName>
        </alternativeName>
        <alternativeName>
            <fullName>p14</fullName>
        </alternativeName>
    </component>
    <component>
        <recommendedName>
            <fullName>RNA-directed RNA polymerase nsp12</fullName>
            <shortName>Pol</shortName>
            <shortName>RdRp</shortName>
            <ecNumber>2.7.7.48</ecNumber>
            <ecNumber>2.7.7.50</ecNumber>
        </recommendedName>
        <alternativeName>
            <fullName>nsp12</fullName>
        </alternativeName>
        <alternativeName>
            <fullName>p100</fullName>
        </alternativeName>
    </component>
    <component>
        <recommendedName>
            <fullName>Helicase</fullName>
            <shortName>Hel</shortName>
            <ecNumber>3.6.4.12</ecNumber>
            <ecNumber>3.6.4.13</ecNumber>
        </recommendedName>
        <alternativeName>
            <fullName>nsp13</fullName>
        </alternativeName>
        <alternativeName>
            <fullName>p66</fullName>
        </alternativeName>
        <alternativeName>
            <fullName>p66-HEL</fullName>
        </alternativeName>
    </component>
    <component>
        <recommendedName>
            <fullName>Exoribonuclease</fullName>
            <shortName>ExoN</shortName>
            <ecNumber>3.1.13.-</ecNumber>
        </recommendedName>
        <alternativeName>
            <fullName>nsp14</fullName>
        </alternativeName>
    </component>
    <component>
        <recommendedName>
            <fullName>Uridylate-specific endoribonuclease</fullName>
            <ecNumber>4.6.1.-</ecNumber>
        </recommendedName>
        <alternativeName>
            <fullName>NendoU</fullName>
        </alternativeName>
        <alternativeName>
            <fullName>nsp15</fullName>
        </alternativeName>
    </component>
    <component>
        <recommendedName>
            <fullName>Putative 2'-O-methyl transferase</fullName>
            <ecNumber>2.1.1.57</ecNumber>
        </recommendedName>
        <alternativeName>
            <fullName>nsp16</fullName>
        </alternativeName>
    </component>
</protein>
<dbReference type="EC" id="3.4.19.12"/>
<dbReference type="EC" id="3.4.22.-"/>
<dbReference type="EC" id="2.7.7.48"/>
<dbReference type="EC" id="2.7.7.50"/>
<dbReference type="EC" id="3.6.4.12"/>
<dbReference type="EC" id="3.6.4.13"/>
<dbReference type="EC" id="3.1.13.-"/>
<dbReference type="EC" id="4.6.1.-"/>
<dbReference type="EC" id="2.1.1.57"/>
<dbReference type="EMBL" id="DQ648858">
    <property type="protein sequence ID" value="ABG47077.1"/>
    <property type="molecule type" value="Genomic_RNA"/>
</dbReference>
<dbReference type="RefSeq" id="YP_001351683.1">
    <molecule id="P0C6W0-1"/>
    <property type="nucleotide sequence ID" value="NC_009657.1"/>
</dbReference>
<dbReference type="SMR" id="P0C6W0"/>
<dbReference type="MEROPS" id="C30.003"/>
<dbReference type="KEGG" id="vg:11266518"/>
<dbReference type="Proteomes" id="UP000113079">
    <property type="component" value="Genome"/>
</dbReference>
<dbReference type="GO" id="GO:0044172">
    <property type="term" value="C:host cell endoplasmic reticulum-Golgi intermediate compartment"/>
    <property type="evidence" value="ECO:0007669"/>
    <property type="project" value="UniProtKB-SubCell"/>
</dbReference>
<dbReference type="GO" id="GO:0033644">
    <property type="term" value="C:host cell membrane"/>
    <property type="evidence" value="ECO:0007669"/>
    <property type="project" value="UniProtKB-SubCell"/>
</dbReference>
<dbReference type="GO" id="GO:0044220">
    <property type="term" value="C:host cell perinuclear region of cytoplasm"/>
    <property type="evidence" value="ECO:0007669"/>
    <property type="project" value="UniProtKB-SubCell"/>
</dbReference>
<dbReference type="GO" id="GO:0016020">
    <property type="term" value="C:membrane"/>
    <property type="evidence" value="ECO:0007669"/>
    <property type="project" value="UniProtKB-KW"/>
</dbReference>
<dbReference type="GO" id="GO:0000175">
    <property type="term" value="F:3'-5'-RNA exonuclease activity"/>
    <property type="evidence" value="ECO:0007669"/>
    <property type="project" value="InterPro"/>
</dbReference>
<dbReference type="GO" id="GO:0043139">
    <property type="term" value="F:5'-3' DNA helicase activity"/>
    <property type="evidence" value="ECO:0007669"/>
    <property type="project" value="TreeGrafter"/>
</dbReference>
<dbReference type="GO" id="GO:0005524">
    <property type="term" value="F:ATP binding"/>
    <property type="evidence" value="ECO:0007669"/>
    <property type="project" value="UniProtKB-KW"/>
</dbReference>
<dbReference type="GO" id="GO:0016887">
    <property type="term" value="F:ATP hydrolysis activity"/>
    <property type="evidence" value="ECO:0007669"/>
    <property type="project" value="RHEA"/>
</dbReference>
<dbReference type="GO" id="GO:0004843">
    <property type="term" value="F:cysteine-type deubiquitinase activity"/>
    <property type="evidence" value="ECO:0007669"/>
    <property type="project" value="UniProtKB-EC"/>
</dbReference>
<dbReference type="GO" id="GO:0004197">
    <property type="term" value="F:cysteine-type endopeptidase activity"/>
    <property type="evidence" value="ECO:0007669"/>
    <property type="project" value="InterPro"/>
</dbReference>
<dbReference type="GO" id="GO:0004519">
    <property type="term" value="F:endonuclease activity"/>
    <property type="evidence" value="ECO:0007669"/>
    <property type="project" value="UniProtKB-KW"/>
</dbReference>
<dbReference type="GO" id="GO:0016829">
    <property type="term" value="F:lyase activity"/>
    <property type="evidence" value="ECO:0007669"/>
    <property type="project" value="UniProtKB-KW"/>
</dbReference>
<dbReference type="GO" id="GO:0004483">
    <property type="term" value="F:mRNA (nucleoside-2'-O-)-methyltransferase activity"/>
    <property type="evidence" value="ECO:0007669"/>
    <property type="project" value="InterPro"/>
</dbReference>
<dbReference type="GO" id="GO:0004482">
    <property type="term" value="F:mRNA 5'-cap (guanine-N7-)-methyltransferase activity"/>
    <property type="evidence" value="ECO:0007669"/>
    <property type="project" value="InterPro"/>
</dbReference>
<dbReference type="GO" id="GO:0008242">
    <property type="term" value="F:omega peptidase activity"/>
    <property type="evidence" value="ECO:0007669"/>
    <property type="project" value="InterPro"/>
</dbReference>
<dbReference type="GO" id="GO:0003723">
    <property type="term" value="F:RNA binding"/>
    <property type="evidence" value="ECO:0007669"/>
    <property type="project" value="UniProtKB-KW"/>
</dbReference>
<dbReference type="GO" id="GO:0003724">
    <property type="term" value="F:RNA helicase activity"/>
    <property type="evidence" value="ECO:0007669"/>
    <property type="project" value="UniProtKB-EC"/>
</dbReference>
<dbReference type="GO" id="GO:0003968">
    <property type="term" value="F:RNA-directed RNA polymerase activity"/>
    <property type="evidence" value="ECO:0007669"/>
    <property type="project" value="UniProtKB-KW"/>
</dbReference>
<dbReference type="GO" id="GO:0008270">
    <property type="term" value="F:zinc ion binding"/>
    <property type="evidence" value="ECO:0007669"/>
    <property type="project" value="UniProtKB-KW"/>
</dbReference>
<dbReference type="GO" id="GO:0006351">
    <property type="term" value="P:DNA-templated transcription"/>
    <property type="evidence" value="ECO:0007669"/>
    <property type="project" value="InterPro"/>
</dbReference>
<dbReference type="GO" id="GO:0006508">
    <property type="term" value="P:proteolysis"/>
    <property type="evidence" value="ECO:0007669"/>
    <property type="project" value="UniProtKB-KW"/>
</dbReference>
<dbReference type="GO" id="GO:0010506">
    <property type="term" value="P:regulation of autophagy"/>
    <property type="evidence" value="ECO:0007669"/>
    <property type="project" value="InterPro"/>
</dbReference>
<dbReference type="GO" id="GO:0039520">
    <property type="term" value="P:symbiont-mediated activation of host autophagy"/>
    <property type="evidence" value="ECO:0007669"/>
    <property type="project" value="UniProtKB-KW"/>
</dbReference>
<dbReference type="GO" id="GO:0039648">
    <property type="term" value="P:symbiont-mediated perturbation of host ubiquitin-like protein modification"/>
    <property type="evidence" value="ECO:0007669"/>
    <property type="project" value="UniProtKB-KW"/>
</dbReference>
<dbReference type="GO" id="GO:0039548">
    <property type="term" value="P:symbiont-mediated suppression of host cytoplasmic pattern recognition receptor signaling pathway via inhibition of IRF3 activity"/>
    <property type="evidence" value="ECO:0007669"/>
    <property type="project" value="UniProtKB-KW"/>
</dbReference>
<dbReference type="GO" id="GO:0019082">
    <property type="term" value="P:viral protein processing"/>
    <property type="evidence" value="ECO:0007669"/>
    <property type="project" value="InterPro"/>
</dbReference>
<dbReference type="GO" id="GO:0039694">
    <property type="term" value="P:viral RNA genome replication"/>
    <property type="evidence" value="ECO:0007669"/>
    <property type="project" value="InterPro"/>
</dbReference>
<dbReference type="GO" id="GO:0075523">
    <property type="term" value="P:viral translational frameshifting"/>
    <property type="evidence" value="ECO:0007669"/>
    <property type="project" value="UniProtKB-KW"/>
</dbReference>
<dbReference type="CDD" id="cd21409">
    <property type="entry name" value="1B_cv_Nsp13-like"/>
    <property type="match status" value="1"/>
</dbReference>
<dbReference type="CDD" id="cd21901">
    <property type="entry name" value="alpha_betaCoV_Nsp10"/>
    <property type="match status" value="1"/>
</dbReference>
<dbReference type="CDD" id="cd21558">
    <property type="entry name" value="alphaCoV-Nsp6"/>
    <property type="match status" value="1"/>
</dbReference>
<dbReference type="CDD" id="cd21723">
    <property type="entry name" value="alphaCoV_Nsp13-helicase"/>
    <property type="match status" value="1"/>
</dbReference>
<dbReference type="CDD" id="cd21660">
    <property type="entry name" value="alphaCoV_Nsp14"/>
    <property type="match status" value="1"/>
</dbReference>
<dbReference type="CDD" id="cd21514">
    <property type="entry name" value="alphaCoV_Nsp2_HCoV-229E-like"/>
    <property type="match status" value="1"/>
</dbReference>
<dbReference type="CDD" id="cd21665">
    <property type="entry name" value="alphaCoV_Nsp5_Mpro"/>
    <property type="match status" value="1"/>
</dbReference>
<dbReference type="CDD" id="cd21826">
    <property type="entry name" value="alphaCoV_Nsp7"/>
    <property type="match status" value="1"/>
</dbReference>
<dbReference type="CDD" id="cd21830">
    <property type="entry name" value="alphaCoV_Nsp8"/>
    <property type="match status" value="1"/>
</dbReference>
<dbReference type="CDD" id="cd21897">
    <property type="entry name" value="alphaCoV_Nsp9"/>
    <property type="match status" value="1"/>
</dbReference>
<dbReference type="CDD" id="cd21731">
    <property type="entry name" value="alphaCoV_PLPro"/>
    <property type="match status" value="1"/>
</dbReference>
<dbReference type="CDD" id="cd21588">
    <property type="entry name" value="alphaCoV_RdRp"/>
    <property type="match status" value="1"/>
</dbReference>
<dbReference type="CDD" id="cd23527">
    <property type="entry name" value="capping_2-OMTase_alphaCoV_Nsp16"/>
    <property type="match status" value="1"/>
</dbReference>
<dbReference type="CDD" id="cd21473">
    <property type="entry name" value="cv_Nsp4_TM"/>
    <property type="match status" value="1"/>
</dbReference>
<dbReference type="CDD" id="cd21167">
    <property type="entry name" value="M_alpha_beta_cv_Nsp15-like"/>
    <property type="match status" value="1"/>
</dbReference>
<dbReference type="CDD" id="cd21557">
    <property type="entry name" value="Macro_X_Nsp3-like"/>
    <property type="match status" value="1"/>
</dbReference>
<dbReference type="CDD" id="cd21161">
    <property type="entry name" value="NendoU_cv_Nsp15-like"/>
    <property type="match status" value="1"/>
</dbReference>
<dbReference type="CDD" id="cd21171">
    <property type="entry name" value="NTD_alpha_betaCoV_Nsp15-like"/>
    <property type="match status" value="1"/>
</dbReference>
<dbReference type="CDD" id="cd21875">
    <property type="entry name" value="PEDV-like_alphaCoV_Nsp1"/>
    <property type="match status" value="1"/>
</dbReference>
<dbReference type="CDD" id="cd21689">
    <property type="entry name" value="stalk_CoV_Nsp13-like"/>
    <property type="match status" value="1"/>
</dbReference>
<dbReference type="CDD" id="cd21712">
    <property type="entry name" value="TM_Y_alphaCoV_Nsp3_C"/>
    <property type="match status" value="1"/>
</dbReference>
<dbReference type="CDD" id="cd21401">
    <property type="entry name" value="ZBD_cv_Nsp13-like"/>
    <property type="match status" value="1"/>
</dbReference>
<dbReference type="Gene3D" id="1.10.8.1190">
    <property type="match status" value="2"/>
</dbReference>
<dbReference type="Gene3D" id="3.10.20.540">
    <property type="match status" value="1"/>
</dbReference>
<dbReference type="Gene3D" id="3.40.50.11580">
    <property type="match status" value="1"/>
</dbReference>
<dbReference type="Gene3D" id="6.10.140.2090">
    <property type="match status" value="1"/>
</dbReference>
<dbReference type="Gene3D" id="1.10.150.420">
    <property type="entry name" value="Coronavirus nonstructural protein 4 C-terminus"/>
    <property type="match status" value="1"/>
</dbReference>
<dbReference type="Gene3D" id="3.40.220.10">
    <property type="entry name" value="Leucine Aminopeptidase, subunit E, domain 1"/>
    <property type="match status" value="1"/>
</dbReference>
<dbReference type="Gene3D" id="1.10.1840.10">
    <property type="entry name" value="main proteinase (3clpro) structure, domain 3"/>
    <property type="match status" value="1"/>
</dbReference>
<dbReference type="Gene3D" id="3.30.160.820">
    <property type="entry name" value="Nsp15 N-terminal domain-like"/>
    <property type="match status" value="1"/>
</dbReference>
<dbReference type="Gene3D" id="1.10.8.370">
    <property type="entry name" value="nsp7 replicase"/>
    <property type="match status" value="1"/>
</dbReference>
<dbReference type="Gene3D" id="3.30.70.3540">
    <property type="entry name" value="Nsp8 replicase, head domain"/>
    <property type="match status" value="1"/>
</dbReference>
<dbReference type="Gene3D" id="3.40.50.300">
    <property type="entry name" value="P-loop containing nucleotide triphosphate hydrolases"/>
    <property type="match status" value="2"/>
</dbReference>
<dbReference type="Gene3D" id="2.40.10.250">
    <property type="entry name" value="Replicase NSP9"/>
    <property type="match status" value="1"/>
</dbReference>
<dbReference type="Gene3D" id="2.40.10.10">
    <property type="entry name" value="Trypsin-like serine proteases"/>
    <property type="match status" value="2"/>
</dbReference>
<dbReference type="Gene3D" id="3.40.50.150">
    <property type="entry name" value="Vaccinia Virus protein VP39"/>
    <property type="match status" value="1"/>
</dbReference>
<dbReference type="InterPro" id="IPR027351">
    <property type="entry name" value="(+)RNA_virus_helicase_core_dom"/>
</dbReference>
<dbReference type="InterPro" id="IPR046443">
    <property type="entry name" value="a/bCoV_NSP1_glob"/>
</dbReference>
<dbReference type="InterPro" id="IPR046440">
    <property type="entry name" value="AV_NSP11N_COV_NSP15M"/>
</dbReference>
<dbReference type="InterPro" id="IPR050534">
    <property type="entry name" value="Coronavir_polyprotein_1ab"/>
</dbReference>
<dbReference type="InterPro" id="IPR043608">
    <property type="entry name" value="CoV_NSP15_M"/>
</dbReference>
<dbReference type="InterPro" id="IPR043606">
    <property type="entry name" value="CoV_NSP15_N"/>
</dbReference>
<dbReference type="InterPro" id="IPR043613">
    <property type="entry name" value="CoV_NSP2_C"/>
</dbReference>
<dbReference type="InterPro" id="IPR047573">
    <property type="entry name" value="CoV_NSP2_M"/>
</dbReference>
<dbReference type="InterPro" id="IPR049894">
    <property type="entry name" value="COV_NSP3_3ECTO"/>
</dbReference>
<dbReference type="InterPro" id="IPR043611">
    <property type="entry name" value="CoV_NSP3_C"/>
</dbReference>
<dbReference type="InterPro" id="IPR047566">
    <property type="entry name" value="CoV_NSP3_Y"/>
</dbReference>
<dbReference type="InterPro" id="IPR032505">
    <property type="entry name" value="CoV_NSP4_C"/>
</dbReference>
<dbReference type="InterPro" id="IPR043612">
    <property type="entry name" value="CoV_NSP4_N"/>
</dbReference>
<dbReference type="InterPro" id="IPR043502">
    <property type="entry name" value="DNA/RNA_pol_sf"/>
</dbReference>
<dbReference type="InterPro" id="IPR041679">
    <property type="entry name" value="DNA2/NAM7-like_C"/>
</dbReference>
<dbReference type="InterPro" id="IPR037227">
    <property type="entry name" value="EndoU-like"/>
</dbReference>
<dbReference type="InterPro" id="IPR002589">
    <property type="entry name" value="Macro_dom"/>
</dbReference>
<dbReference type="InterPro" id="IPR043472">
    <property type="entry name" value="Macro_dom-like"/>
</dbReference>
<dbReference type="InterPro" id="IPR044371">
    <property type="entry name" value="Macro_X_NSP3-like"/>
</dbReference>
<dbReference type="InterPro" id="IPR046435">
    <property type="entry name" value="N7_MTase_CoV"/>
</dbReference>
<dbReference type="InterPro" id="IPR043609">
    <property type="entry name" value="NendoU_nidovirus"/>
</dbReference>
<dbReference type="InterPro" id="IPR044863">
    <property type="entry name" value="NIRAN"/>
</dbReference>
<dbReference type="InterPro" id="IPR046438">
    <property type="entry name" value="NIV_2_O_MTASE"/>
</dbReference>
<dbReference type="InterPro" id="IPR046436">
    <property type="entry name" value="NIV_EXON"/>
</dbReference>
<dbReference type="InterPro" id="IPR036333">
    <property type="entry name" value="NSP10_sf_CoV"/>
</dbReference>
<dbReference type="InterPro" id="IPR047570">
    <property type="entry name" value="NSP12_IF_CoV"/>
</dbReference>
<dbReference type="InterPro" id="IPR044343">
    <property type="entry name" value="NSP13_1B_dom_CoV"/>
</dbReference>
<dbReference type="InterPro" id="IPR047912">
    <property type="entry name" value="Nsp13_helicase_alphaCoV"/>
</dbReference>
<dbReference type="InterPro" id="IPR048673">
    <property type="entry name" value="NSP13_stalk_CoV"/>
</dbReference>
<dbReference type="InterPro" id="IPR048672">
    <property type="entry name" value="NSP13_ZBD_CoV"/>
</dbReference>
<dbReference type="InterPro" id="IPR027352">
    <property type="entry name" value="NSP13_ZBD_CoV-like"/>
</dbReference>
<dbReference type="InterPro" id="IPR044313">
    <property type="entry name" value="NSP14_alphaCoV"/>
</dbReference>
<dbReference type="InterPro" id="IPR009466">
    <property type="entry name" value="NSP14_CoV"/>
</dbReference>
<dbReference type="InterPro" id="IPR044330">
    <property type="entry name" value="NSP15_alpha_betaCoV_N"/>
</dbReference>
<dbReference type="InterPro" id="IPR044322">
    <property type="entry name" value="NSP15_M_alpha_beta_CoV"/>
</dbReference>
<dbReference type="InterPro" id="IPR043174">
    <property type="entry name" value="NSP15_middle_sf"/>
</dbReference>
<dbReference type="InterPro" id="IPR042515">
    <property type="entry name" value="NSP15_N_CoV"/>
</dbReference>
<dbReference type="InterPro" id="IPR044401">
    <property type="entry name" value="NSP15_NendoU_CoV"/>
</dbReference>
<dbReference type="InterPro" id="IPR009461">
    <property type="entry name" value="NSP16_CoV-like"/>
</dbReference>
<dbReference type="InterPro" id="IPR044385">
    <property type="entry name" value="NSP2_HCoV-229E-like"/>
</dbReference>
<dbReference type="InterPro" id="IPR043615">
    <property type="entry name" value="NSP2_N_CoV"/>
</dbReference>
<dbReference type="InterPro" id="IPR044357">
    <property type="entry name" value="NSP3_Ubl1_dom_CoV"/>
</dbReference>
<dbReference type="InterPro" id="IPR044353">
    <property type="entry name" value="Nsp3_Ubl2_dom_CoV"/>
</dbReference>
<dbReference type="InterPro" id="IPR038123">
    <property type="entry name" value="NSP4_C_sf_CoV"/>
</dbReference>
<dbReference type="InterPro" id="IPR044309">
    <property type="entry name" value="NSP5_Mpro_alphaCoV"/>
</dbReference>
<dbReference type="InterPro" id="IPR044369">
    <property type="entry name" value="NSP6_alphaCoV"/>
</dbReference>
<dbReference type="InterPro" id="IPR043610">
    <property type="entry name" value="NSP6_CoV"/>
</dbReference>
<dbReference type="InterPro" id="IPR014828">
    <property type="entry name" value="NSP7_CoV"/>
</dbReference>
<dbReference type="InterPro" id="IPR037204">
    <property type="entry name" value="NSP7_sf_CoV"/>
</dbReference>
<dbReference type="InterPro" id="IPR014829">
    <property type="entry name" value="NSP8_CoV"/>
</dbReference>
<dbReference type="InterPro" id="IPR037230">
    <property type="entry name" value="NSP8_sf_CoV"/>
</dbReference>
<dbReference type="InterPro" id="IPR014822">
    <property type="entry name" value="NSP9_CoV"/>
</dbReference>
<dbReference type="InterPro" id="IPR036499">
    <property type="entry name" value="NSP9_sf_CoV"/>
</dbReference>
<dbReference type="InterPro" id="IPR027417">
    <property type="entry name" value="P-loop_NTPase"/>
</dbReference>
<dbReference type="InterPro" id="IPR013016">
    <property type="entry name" value="Peptidase_C16_CoV"/>
</dbReference>
<dbReference type="InterPro" id="IPR008740">
    <property type="entry name" value="Peptidase_C30_CoV"/>
</dbReference>
<dbReference type="InterPro" id="IPR043477">
    <property type="entry name" value="Peptidase_C30_dom3_CoV"/>
</dbReference>
<dbReference type="InterPro" id="IPR009003">
    <property type="entry name" value="Peptidase_S1_PA"/>
</dbReference>
<dbReference type="InterPro" id="IPR043504">
    <property type="entry name" value="Peptidase_S1_PA_chymotrypsin"/>
</dbReference>
<dbReference type="InterPro" id="IPR043177">
    <property type="entry name" value="PLpro_N_sf_CoV"/>
</dbReference>
<dbReference type="InterPro" id="IPR043178">
    <property type="entry name" value="PLpro_thumb_sf_CoV"/>
</dbReference>
<dbReference type="InterPro" id="IPR044356">
    <property type="entry name" value="RdRp_alphaCoV"/>
</dbReference>
<dbReference type="InterPro" id="IPR046441">
    <property type="entry name" value="RdRp_CoV"/>
</dbReference>
<dbReference type="InterPro" id="IPR009469">
    <property type="entry name" value="RdRp_N_CoV"/>
</dbReference>
<dbReference type="InterPro" id="IPR001205">
    <property type="entry name" value="RNA-dir_pol_C"/>
</dbReference>
<dbReference type="InterPro" id="IPR007094">
    <property type="entry name" value="RNA-dir_pol_PSvirus"/>
</dbReference>
<dbReference type="InterPro" id="IPR018995">
    <property type="entry name" value="RNA_synth_NSP10_CoV"/>
</dbReference>
<dbReference type="InterPro" id="IPR029063">
    <property type="entry name" value="SAM-dependent_MTases_sf"/>
</dbReference>
<dbReference type="PANTHER" id="PTHR43788">
    <property type="entry name" value="DNA2/NAM7 HELICASE FAMILY MEMBER"/>
    <property type="match status" value="1"/>
</dbReference>
<dbReference type="PANTHER" id="PTHR43788:SF16">
    <property type="entry name" value="HELICASE WITH ZINC FINGER 2"/>
    <property type="match status" value="1"/>
</dbReference>
<dbReference type="Pfam" id="PF13087">
    <property type="entry name" value="AAA_12"/>
    <property type="match status" value="1"/>
</dbReference>
<dbReference type="Pfam" id="PF13604">
    <property type="entry name" value="AAA_30"/>
    <property type="match status" value="1"/>
</dbReference>
<dbReference type="Pfam" id="PF06471">
    <property type="entry name" value="CoV_ExoN"/>
    <property type="match status" value="1"/>
</dbReference>
<dbReference type="Pfam" id="PF06460">
    <property type="entry name" value="CoV_Methyltr_2"/>
    <property type="match status" value="1"/>
</dbReference>
<dbReference type="Pfam" id="PF09401">
    <property type="entry name" value="CoV_NSP10"/>
    <property type="match status" value="1"/>
</dbReference>
<dbReference type="Pfam" id="PF20631">
    <property type="entry name" value="CoV_NSP13_1B"/>
    <property type="match status" value="1"/>
</dbReference>
<dbReference type="Pfam" id="PF20633">
    <property type="entry name" value="CoV_NSP13_stalk"/>
    <property type="match status" value="1"/>
</dbReference>
<dbReference type="Pfam" id="PF20632">
    <property type="entry name" value="CoV_NSP13_ZBD"/>
    <property type="match status" value="1"/>
</dbReference>
<dbReference type="Pfam" id="PF19215">
    <property type="entry name" value="CoV_NSP15_C"/>
    <property type="match status" value="1"/>
</dbReference>
<dbReference type="Pfam" id="PF19216">
    <property type="entry name" value="CoV_NSP15_M"/>
    <property type="match status" value="1"/>
</dbReference>
<dbReference type="Pfam" id="PF19219">
    <property type="entry name" value="CoV_NSP15_N"/>
    <property type="match status" value="1"/>
</dbReference>
<dbReference type="Pfam" id="PF19212">
    <property type="entry name" value="CoV_NSP2_C"/>
    <property type="match status" value="2"/>
</dbReference>
<dbReference type="Pfam" id="PF19211">
    <property type="entry name" value="CoV_NSP2_N"/>
    <property type="match status" value="1"/>
</dbReference>
<dbReference type="Pfam" id="PF19218">
    <property type="entry name" value="CoV_NSP3_C"/>
    <property type="match status" value="1"/>
</dbReference>
<dbReference type="Pfam" id="PF16348">
    <property type="entry name" value="CoV_NSP4_C"/>
    <property type="match status" value="1"/>
</dbReference>
<dbReference type="Pfam" id="PF19217">
    <property type="entry name" value="CoV_NSP4_N"/>
    <property type="match status" value="1"/>
</dbReference>
<dbReference type="Pfam" id="PF19213">
    <property type="entry name" value="CoV_NSP6"/>
    <property type="match status" value="1"/>
</dbReference>
<dbReference type="Pfam" id="PF08716">
    <property type="entry name" value="CoV_NSP7"/>
    <property type="match status" value="1"/>
</dbReference>
<dbReference type="Pfam" id="PF08717">
    <property type="entry name" value="CoV_NSP8"/>
    <property type="match status" value="1"/>
</dbReference>
<dbReference type="Pfam" id="PF08710">
    <property type="entry name" value="CoV_NSP9"/>
    <property type="match status" value="1"/>
</dbReference>
<dbReference type="Pfam" id="PF08715">
    <property type="entry name" value="CoV_peptidase"/>
    <property type="match status" value="2"/>
</dbReference>
<dbReference type="Pfam" id="PF06478">
    <property type="entry name" value="CoV_RPol_N"/>
    <property type="match status" value="1"/>
</dbReference>
<dbReference type="Pfam" id="PF01661">
    <property type="entry name" value="Macro"/>
    <property type="match status" value="1"/>
</dbReference>
<dbReference type="Pfam" id="PF05409">
    <property type="entry name" value="Peptidase_C30"/>
    <property type="match status" value="1"/>
</dbReference>
<dbReference type="Pfam" id="PF00680">
    <property type="entry name" value="RdRP_1"/>
    <property type="match status" value="1"/>
</dbReference>
<dbReference type="SMART" id="SM00506">
    <property type="entry name" value="A1pp"/>
    <property type="match status" value="1"/>
</dbReference>
<dbReference type="SUPFAM" id="SSF144246">
    <property type="entry name" value="Coronavirus NSP10-like"/>
    <property type="match status" value="1"/>
</dbReference>
<dbReference type="SUPFAM" id="SSF140367">
    <property type="entry name" value="Coronavirus NSP7-like"/>
    <property type="match status" value="1"/>
</dbReference>
<dbReference type="SUPFAM" id="SSF143076">
    <property type="entry name" value="Coronavirus NSP8-like"/>
    <property type="match status" value="1"/>
</dbReference>
<dbReference type="SUPFAM" id="SSF56672">
    <property type="entry name" value="DNA/RNA polymerases"/>
    <property type="match status" value="1"/>
</dbReference>
<dbReference type="SUPFAM" id="SSF142877">
    <property type="entry name" value="EndoU-like"/>
    <property type="match status" value="1"/>
</dbReference>
<dbReference type="SUPFAM" id="SSF52949">
    <property type="entry name" value="Macro domain-like"/>
    <property type="match status" value="1"/>
</dbReference>
<dbReference type="SUPFAM" id="SSF52540">
    <property type="entry name" value="P-loop containing nucleoside triphosphate hydrolases"/>
    <property type="match status" value="1"/>
</dbReference>
<dbReference type="SUPFAM" id="SSF101816">
    <property type="entry name" value="Replicase NSP9"/>
    <property type="match status" value="1"/>
</dbReference>
<dbReference type="SUPFAM" id="SSF53335">
    <property type="entry name" value="S-adenosyl-L-methionine-dependent methyltransferases"/>
    <property type="match status" value="1"/>
</dbReference>
<dbReference type="SUPFAM" id="SSF50494">
    <property type="entry name" value="Trypsin-like serine proteases"/>
    <property type="match status" value="1"/>
</dbReference>
<dbReference type="PROSITE" id="PS51961">
    <property type="entry name" value="AV_NSP11N_COV_NSP15M"/>
    <property type="match status" value="1"/>
</dbReference>
<dbReference type="PROSITE" id="PS51993">
    <property type="entry name" value="COV_3ECTO"/>
    <property type="match status" value="1"/>
</dbReference>
<dbReference type="PROSITE" id="PS51952">
    <property type="entry name" value="COV_EXON_MTASE_COACT"/>
    <property type="match status" value="1"/>
</dbReference>
<dbReference type="PROSITE" id="PS51954">
    <property type="entry name" value="COV_N7_MTASE"/>
    <property type="match status" value="1"/>
</dbReference>
<dbReference type="PROSITE" id="PS51962">
    <property type="entry name" value="COV_NSP1"/>
    <property type="match status" value="1"/>
</dbReference>
<dbReference type="PROSITE" id="PS52000">
    <property type="entry name" value="COV_NSP12_IF"/>
    <property type="match status" value="1"/>
</dbReference>
<dbReference type="PROSITE" id="PS51948">
    <property type="entry name" value="COV_NSP12_RDRP"/>
    <property type="match status" value="1"/>
</dbReference>
<dbReference type="PROSITE" id="PS51960">
    <property type="entry name" value="COV_NSP15_NTD"/>
    <property type="match status" value="1"/>
</dbReference>
<dbReference type="PROSITE" id="PS51991">
    <property type="entry name" value="COV_NSP2_C"/>
    <property type="match status" value="1"/>
</dbReference>
<dbReference type="PROSITE" id="PS51990">
    <property type="entry name" value="COV_NSP2_M"/>
    <property type="match status" value="1"/>
</dbReference>
<dbReference type="PROSITE" id="PS51989">
    <property type="entry name" value="COV_NSP2_N"/>
    <property type="match status" value="1"/>
</dbReference>
<dbReference type="PROSITE" id="PS51992">
    <property type="entry name" value="COV_NSP3_Y"/>
    <property type="match status" value="1"/>
</dbReference>
<dbReference type="PROSITE" id="PS51943">
    <property type="entry name" value="COV_NSP3A_UBL"/>
    <property type="match status" value="1"/>
</dbReference>
<dbReference type="PROSITE" id="PS51944">
    <property type="entry name" value="COV_NSP3D_UBL"/>
    <property type="match status" value="1"/>
</dbReference>
<dbReference type="PROSITE" id="PS51946">
    <property type="entry name" value="COV_NSP4C"/>
    <property type="match status" value="1"/>
</dbReference>
<dbReference type="PROSITE" id="PS51949">
    <property type="entry name" value="COV_NSP7"/>
    <property type="match status" value="1"/>
</dbReference>
<dbReference type="PROSITE" id="PS51950">
    <property type="entry name" value="COV_NSP8"/>
    <property type="match status" value="1"/>
</dbReference>
<dbReference type="PROSITE" id="PS51951">
    <property type="entry name" value="COV_NSP9_SSRNA_BD"/>
    <property type="match status" value="1"/>
</dbReference>
<dbReference type="PROSITE" id="PS51653">
    <property type="entry name" value="CV_ZBD"/>
    <property type="match status" value="1"/>
</dbReference>
<dbReference type="PROSITE" id="PS51442">
    <property type="entry name" value="M_PRO"/>
    <property type="match status" value="1"/>
</dbReference>
<dbReference type="PROSITE" id="PS51154">
    <property type="entry name" value="MACRO"/>
    <property type="match status" value="1"/>
</dbReference>
<dbReference type="PROSITE" id="PS51958">
    <property type="entry name" value="NENDOU"/>
    <property type="match status" value="1"/>
</dbReference>
<dbReference type="PROSITE" id="PS51947">
    <property type="entry name" value="NIRAN"/>
    <property type="match status" value="1"/>
</dbReference>
<dbReference type="PROSITE" id="PS51955">
    <property type="entry name" value="NIV_2_O_MTASE"/>
    <property type="match status" value="1"/>
</dbReference>
<dbReference type="PROSITE" id="PS51953">
    <property type="entry name" value="NIV_EXON"/>
    <property type="match status" value="1"/>
</dbReference>
<dbReference type="PROSITE" id="PS51124">
    <property type="entry name" value="PEPTIDASE_C16"/>
    <property type="match status" value="2"/>
</dbReference>
<dbReference type="PROSITE" id="PS51657">
    <property type="entry name" value="PSRV_HELICASE"/>
    <property type="match status" value="1"/>
</dbReference>
<dbReference type="PROSITE" id="PS50507">
    <property type="entry name" value="RDRP_SSRNA_POS"/>
    <property type="match status" value="1"/>
</dbReference>
<organismHost>
    <name type="scientific">Scotophilus kuhlii</name>
    <name type="common">Lesser asiatic yellow bat</name>
    <dbReference type="NCBI Taxonomy" id="153297"/>
</organismHost>
<feature type="chain" id="PRO_0000289911" description="Non-structural protein 1" evidence="1">
    <location>
        <begin position="1"/>
        <end position="110"/>
    </location>
</feature>
<feature type="chain" id="PRO_0000289912" description="Non-structural protein 2" evidence="1">
    <location>
        <begin position="111"/>
        <end position="897"/>
    </location>
</feature>
<feature type="chain" id="PRO_0000289913" description="Non-structural protein 3" evidence="1">
    <location>
        <begin position="898"/>
        <end position="2530"/>
    </location>
</feature>
<feature type="chain" id="PRO_0000289914" description="Non-structural protein 4" evidence="1">
    <location>
        <begin position="2531"/>
        <end position="3012"/>
    </location>
</feature>
<feature type="chain" id="PRO_0000289915" description="3C-like proteinase" evidence="1">
    <location>
        <begin position="3013"/>
        <end position="3314"/>
    </location>
</feature>
<feature type="chain" id="PRO_0000289916" description="Non-structural protein 6" evidence="1">
    <location>
        <begin position="3315"/>
        <end position="3590"/>
    </location>
</feature>
<feature type="chain" id="PRO_0000289917" description="Non-structural protein 7" evidence="1">
    <location>
        <begin position="3591"/>
        <end position="3673"/>
    </location>
</feature>
<feature type="chain" id="PRO_0000289918" description="Non-structural protein 8" evidence="1">
    <location>
        <begin position="3674"/>
        <end position="3868"/>
    </location>
</feature>
<feature type="chain" id="PRO_0000289919" description="Viral protein genome-linked nsp9" evidence="1">
    <location>
        <begin position="3869"/>
        <end position="3976"/>
    </location>
</feature>
<feature type="chain" id="PRO_0000289920" description="Non-structural protein 10" evidence="1">
    <location>
        <begin position="3977"/>
        <end position="4111"/>
    </location>
</feature>
<feature type="chain" id="PRO_0000289921" description="RNA-directed RNA polymerase nsp12" evidence="1">
    <location>
        <begin position="4112"/>
        <end position="5038"/>
    </location>
</feature>
<feature type="chain" id="PRO_0000289922" description="Helicase" evidence="1">
    <location>
        <begin position="5039"/>
        <end position="5557"/>
    </location>
</feature>
<feature type="chain" id="PRO_0000289923" description="Exoribonuclease" evidence="1">
    <location>
        <begin position="5558"/>
        <end position="6153"/>
    </location>
</feature>
<feature type="chain" id="PRO_0000289924" description="Uridylate-specific endoribonuclease" evidence="1">
    <location>
        <begin position="6154"/>
        <end position="6492"/>
    </location>
</feature>
<feature type="chain" id="PRO_0000289925" description="Putative 2'-O-methyl transferase" evidence="1">
    <location>
        <begin position="6493"/>
        <end position="6793"/>
    </location>
</feature>
<feature type="transmembrane region" description="Helical" evidence="4">
    <location>
        <begin position="1973"/>
        <end position="1993"/>
    </location>
</feature>
<feature type="transmembrane region" description="Helical" evidence="4">
    <location>
        <begin position="2036"/>
        <end position="2056"/>
    </location>
</feature>
<feature type="transmembrane region" description="Helical" evidence="4">
    <location>
        <begin position="2119"/>
        <end position="2139"/>
    </location>
</feature>
<feature type="transmembrane region" description="Helical" evidence="4">
    <location>
        <begin position="2141"/>
        <end position="2161"/>
    </location>
</feature>
<feature type="transmembrane region" description="Helical" evidence="4">
    <location>
        <begin position="2164"/>
        <end position="2184"/>
    </location>
</feature>
<feature type="transmembrane region" description="Helical" evidence="4">
    <location>
        <begin position="2543"/>
        <end position="2563"/>
    </location>
</feature>
<feature type="transmembrane region" description="Helical" evidence="4">
    <location>
        <begin position="2634"/>
        <end position="2654"/>
    </location>
</feature>
<feature type="transmembrane region" description="Helical" evidence="4">
    <location>
        <begin position="2669"/>
        <end position="2689"/>
    </location>
</feature>
<feature type="transmembrane region" description="Helical" evidence="4">
    <location>
        <begin position="2769"/>
        <end position="2789"/>
    </location>
</feature>
<feature type="transmembrane region" description="Helical" evidence="4">
    <location>
        <begin position="2802"/>
        <end position="2822"/>
    </location>
</feature>
<feature type="transmembrane region" description="Helical" evidence="4">
    <location>
        <begin position="2829"/>
        <end position="2849"/>
    </location>
</feature>
<feature type="transmembrane region" description="Helical" evidence="4">
    <location>
        <begin position="2878"/>
        <end position="2898"/>
    </location>
</feature>
<feature type="transmembrane region" description="Helical" evidence="4">
    <location>
        <begin position="3351"/>
        <end position="3371"/>
    </location>
</feature>
<feature type="transmembrane region" description="Helical" evidence="4">
    <location>
        <begin position="3376"/>
        <end position="3396"/>
    </location>
</feature>
<feature type="transmembrane region" description="Helical" evidence="4">
    <location>
        <begin position="3414"/>
        <end position="3434"/>
    </location>
</feature>
<feature type="transmembrane region" description="Helical" evidence="4">
    <location>
        <begin position="3443"/>
        <end position="3463"/>
    </location>
</feature>
<feature type="transmembrane region" description="Helical" evidence="4">
    <location>
        <begin position="3466"/>
        <end position="3486"/>
    </location>
</feature>
<feature type="transmembrane region" description="Helical" evidence="4">
    <location>
        <begin position="3488"/>
        <end position="3507"/>
    </location>
</feature>
<feature type="transmembrane region" description="Helical" evidence="4">
    <location>
        <begin position="3511"/>
        <end position="3531"/>
    </location>
</feature>
<feature type="domain" description="CoV Nsp1 globular" evidence="24">
    <location>
        <begin position="2"/>
        <end position="109"/>
    </location>
</feature>
<feature type="domain" description="CoV Nsp2 N-terminal" evidence="25">
    <location>
        <begin position="112"/>
        <end position="368"/>
    </location>
</feature>
<feature type="domain" description="CoV Nsp2 middle" evidence="26">
    <location>
        <begin position="396"/>
        <end position="785"/>
    </location>
</feature>
<feature type="domain" description="CoV Nsp2 C-terminal" evidence="27">
    <location>
        <begin position="776"/>
        <end position="897"/>
    </location>
</feature>
<feature type="domain" description="Ubiquitin-like 1" evidence="5">
    <location>
        <begin position="898"/>
        <end position="993"/>
    </location>
</feature>
<feature type="domain" description="Peptidase C16 1" evidence="6">
    <location>
        <begin position="1069"/>
        <end position="1302"/>
    </location>
</feature>
<feature type="domain" description="Macro" evidence="7">
    <location>
        <begin position="1303"/>
        <end position="1467"/>
    </location>
</feature>
<feature type="domain" description="Ubiquitin-like 2" evidence="5">
    <location>
        <begin position="1638"/>
        <end position="1693"/>
    </location>
</feature>
<feature type="domain" description="Peptidase C16 2" evidence="6">
    <location>
        <begin position="1699"/>
        <end position="1965"/>
    </location>
</feature>
<feature type="domain" description="3Ecto" evidence="29">
    <location>
        <begin position="2052"/>
        <end position="2116"/>
    </location>
</feature>
<feature type="domain" description="CoV Nsp3 Y" evidence="28">
    <location>
        <begin position="2190"/>
        <end position="2530"/>
    </location>
</feature>
<feature type="domain" description="Nsp4C" evidence="11">
    <location>
        <begin position="2917"/>
        <end position="3012"/>
    </location>
</feature>
<feature type="domain" description="Peptidase C30" evidence="9">
    <location>
        <begin position="3013"/>
        <end position="3314"/>
    </location>
</feature>
<feature type="domain" description="RdRp Nsp7 cofactor" evidence="14">
    <location>
        <begin position="3591"/>
        <end position="3673"/>
    </location>
</feature>
<feature type="domain" description="RdRp Nsp8 cofactor" evidence="15">
    <location>
        <begin position="3674"/>
        <end position="3868"/>
    </location>
</feature>
<feature type="domain" description="Nsp9 ssRNA-binding" evidence="16">
    <location>
        <begin position="3869"/>
        <end position="3976"/>
    </location>
</feature>
<feature type="domain" description="ExoN/MTase coactivator" evidence="17">
    <location>
        <begin position="3977"/>
        <end position="4115"/>
    </location>
</feature>
<feature type="domain" description="NiRAN" evidence="12">
    <location>
        <begin position="4117"/>
        <end position="4366"/>
    </location>
</feature>
<feature type="domain" description="Nsp12 Interface" evidence="30">
    <location>
        <begin position="4372"/>
        <end position="4470"/>
    </location>
</feature>
<feature type="domain" description="Nsp12 RNA-dependent RNA polymerase" evidence="13">
    <location>
        <begin position="4471"/>
        <end position="5038"/>
    </location>
</feature>
<feature type="domain" description="RdRp catalytic" evidence="8">
    <location>
        <begin position="4718"/>
        <end position="4880"/>
    </location>
</feature>
<feature type="domain" description="CV ZBD" evidence="10">
    <location>
        <begin position="5039"/>
        <end position="5151"/>
    </location>
</feature>
<feature type="domain" description="(+)RNA virus helicase ATP-binding">
    <location>
        <begin position="5296"/>
        <end position="5477"/>
    </location>
</feature>
<feature type="domain" description="(+)RNA virus helicase C-terminal">
    <location>
        <begin position="5478"/>
        <end position="5647"/>
    </location>
</feature>
<feature type="domain" description="ExoN" evidence="18">
    <location>
        <begin position="5707"/>
        <end position="5921"/>
    </location>
</feature>
<feature type="domain" description="N7-MTase" evidence="19">
    <location>
        <begin position="5930"/>
        <end position="6151"/>
    </location>
</feature>
<feature type="domain" description="Nsp15 N-terminal oligomerization" evidence="22">
    <location>
        <begin position="6154"/>
        <end position="6214"/>
    </location>
</feature>
<feature type="domain" description="AV-Nsp11N/CoV-Nsp15M" evidence="23">
    <location>
        <begin position="6215"/>
        <end position="6332"/>
    </location>
</feature>
<feature type="domain" description="NendoU" evidence="21">
    <location>
        <begin position="6349"/>
        <end position="6489"/>
    </location>
</feature>
<feature type="domain" description="Nidovirus-type SAM-dependent 2'-O-MTase" evidence="20">
    <location>
        <begin position="6493"/>
        <end position="6789"/>
    </location>
</feature>
<feature type="zinc finger region" description="C4-type 1; degenerate" evidence="6">
    <location>
        <begin position="1174"/>
        <end position="1205"/>
    </location>
</feature>
<feature type="zinc finger region" description="C4-type 2; degenerate" evidence="6">
    <location>
        <begin position="1816"/>
        <end position="1849"/>
    </location>
</feature>
<feature type="zinc finger region" evidence="1">
    <location>
        <begin position="4050"/>
        <end position="4066"/>
    </location>
</feature>
<feature type="zinc finger region" evidence="1">
    <location>
        <begin position="4092"/>
        <end position="4105"/>
    </location>
</feature>
<feature type="region of interest" description="HD1" evidence="1">
    <location>
        <begin position="1973"/>
        <end position="2184"/>
    </location>
</feature>
<feature type="region of interest" description="Y1" evidence="28">
    <location>
        <begin position="2190"/>
        <end position="2280"/>
    </location>
</feature>
<feature type="region of interest" description="ZF1" evidence="28">
    <location>
        <begin position="2194"/>
        <end position="2207"/>
    </location>
</feature>
<feature type="region of interest" description="ZF2" evidence="28">
    <location>
        <begin position="2240"/>
        <end position="2250"/>
    </location>
</feature>
<feature type="region of interest" description="CoV-Y" evidence="28">
    <location>
        <begin position="2281"/>
        <end position="2530"/>
    </location>
</feature>
<feature type="region of interest" description="Y2" evidence="28">
    <location>
        <begin position="2281"/>
        <end position="2370"/>
    </location>
</feature>
<feature type="region of interest" description="Y3" evidence="28">
    <location>
        <begin position="2371"/>
        <end position="2428"/>
    </location>
</feature>
<feature type="region of interest" description="Y4" evidence="28">
    <location>
        <begin position="2429"/>
        <end position="2530"/>
    </location>
</feature>
<feature type="region of interest" description="HD2" evidence="1">
    <location>
        <begin position="2543"/>
        <end position="2898"/>
    </location>
</feature>
<feature type="region of interest" description="HD3" evidence="1">
    <location>
        <begin position="3351"/>
        <end position="3531"/>
    </location>
</feature>
<feature type="region of interest" description="RdRp Fingers N-ter" evidence="13">
    <location>
        <begin position="4473"/>
        <end position="4687"/>
    </location>
</feature>
<feature type="region of interest" description="RdRp Palm N-ter" evidence="13">
    <location>
        <begin position="4688"/>
        <end position="4726"/>
    </location>
</feature>
<feature type="region of interest" description="RdRp Fingers C-ter" evidence="13">
    <location>
        <begin position="4727"/>
        <end position="4785"/>
    </location>
</feature>
<feature type="region of interest" description="RdRp Palm C-ter" evidence="13">
    <location>
        <begin position="4786"/>
        <end position="4921"/>
    </location>
</feature>
<feature type="region of interest" description="RdRp Thumb" evidence="13">
    <location>
        <begin position="4922"/>
        <end position="5038"/>
    </location>
</feature>
<feature type="region of interest" description="GpppA-binding" evidence="19">
    <location>
        <begin position="6042"/>
        <end position="6056"/>
    </location>
</feature>
<feature type="active site" description="For PL1-PRO activity" evidence="6">
    <location>
        <position position="1103"/>
    </location>
</feature>
<feature type="active site" description="For PL1-PRO activity" evidence="6">
    <location>
        <position position="1252"/>
    </location>
</feature>
<feature type="active site" description="For PL1-PRO activity" evidence="6">
    <location>
        <position position="1265"/>
    </location>
</feature>
<feature type="active site" description="For PL2-PRO activity" evidence="6">
    <location>
        <position position="1737"/>
    </location>
</feature>
<feature type="active site" description="For PL2-PRO activity" evidence="6">
    <location>
        <position position="1902"/>
    </location>
</feature>
<feature type="active site" description="For PL2-PRO activity" evidence="6">
    <location>
        <position position="1915"/>
    </location>
</feature>
<feature type="active site" description="For 3CL-PRO activity" evidence="9">
    <location>
        <position position="3053"/>
    </location>
</feature>
<feature type="active site" description="For 3CL-PRO activity" evidence="9">
    <location>
        <position position="3156"/>
    </location>
</feature>
<feature type="active site" evidence="13">
    <location>
        <position position="4865"/>
    </location>
</feature>
<feature type="active site" evidence="13">
    <location>
        <position position="4866"/>
    </location>
</feature>
<feature type="active site" evidence="13">
    <location>
        <position position="4867"/>
    </location>
</feature>
<feature type="active site" evidence="18">
    <location>
        <position position="5725"/>
    </location>
</feature>
<feature type="active site" evidence="18">
    <location>
        <position position="5727"/>
    </location>
</feature>
<feature type="active site" evidence="18">
    <location>
        <position position="5826"/>
    </location>
</feature>
<feature type="active site" evidence="18">
    <location>
        <position position="5902"/>
    </location>
</feature>
<feature type="active site" evidence="18">
    <location>
        <position position="5907"/>
    </location>
</feature>
<feature type="active site" evidence="21">
    <location>
        <position position="6379"/>
    </location>
</feature>
<feature type="active site" evidence="21">
    <location>
        <position position="6394"/>
    </location>
</feature>
<feature type="active site" evidence="21">
    <location>
        <position position="6435"/>
    </location>
</feature>
<feature type="active site" evidence="20">
    <location>
        <position position="6537"/>
    </location>
</feature>
<feature type="active site" evidence="20">
    <location>
        <position position="6621"/>
    </location>
</feature>
<feature type="active site" evidence="20">
    <location>
        <position position="6661"/>
    </location>
</feature>
<feature type="active site" evidence="20">
    <location>
        <position position="6694"/>
    </location>
</feature>
<feature type="binding site" evidence="28">
    <location>
        <position position="2194"/>
    </location>
    <ligand>
        <name>Zn(2+)</name>
        <dbReference type="ChEBI" id="CHEBI:29105"/>
        <label>1</label>
    </ligand>
</feature>
<feature type="binding site" evidence="28">
    <location>
        <position position="2199"/>
    </location>
    <ligand>
        <name>Zn(2+)</name>
        <dbReference type="ChEBI" id="CHEBI:29105"/>
        <label>1</label>
    </ligand>
</feature>
<feature type="binding site" evidence="28">
    <location>
        <position position="2204"/>
    </location>
    <ligand>
        <name>Zn(2+)</name>
        <dbReference type="ChEBI" id="CHEBI:29105"/>
        <label>1</label>
    </ligand>
</feature>
<feature type="binding site" evidence="28">
    <location>
        <position position="2207"/>
    </location>
    <ligand>
        <name>Zn(2+)</name>
        <dbReference type="ChEBI" id="CHEBI:29105"/>
        <label>1</label>
    </ligand>
</feature>
<feature type="binding site" evidence="28">
    <location>
        <position position="2240"/>
    </location>
    <ligand>
        <name>Zn(2+)</name>
        <dbReference type="ChEBI" id="CHEBI:29105"/>
        <label>2</label>
    </ligand>
</feature>
<feature type="binding site" evidence="28">
    <location>
        <position position="2243"/>
    </location>
    <ligand>
        <name>Zn(2+)</name>
        <dbReference type="ChEBI" id="CHEBI:29105"/>
        <label>2</label>
    </ligand>
</feature>
<feature type="binding site" evidence="28">
    <location>
        <position position="2247"/>
    </location>
    <ligand>
        <name>Zn(2+)</name>
        <dbReference type="ChEBI" id="CHEBI:29105"/>
        <label>2</label>
    </ligand>
</feature>
<feature type="binding site" evidence="28">
    <location>
        <position position="2250"/>
    </location>
    <ligand>
        <name>Zn(2+)</name>
        <dbReference type="ChEBI" id="CHEBI:29105"/>
        <label>2</label>
    </ligand>
</feature>
<feature type="binding site" evidence="17">
    <location>
        <position position="4050"/>
    </location>
    <ligand>
        <name>Zn(2+)</name>
        <dbReference type="ChEBI" id="CHEBI:29105"/>
        <label>3</label>
    </ligand>
</feature>
<feature type="binding site" evidence="17">
    <location>
        <position position="4053"/>
    </location>
    <ligand>
        <name>Zn(2+)</name>
        <dbReference type="ChEBI" id="CHEBI:29105"/>
        <label>3</label>
    </ligand>
</feature>
<feature type="binding site" evidence="17">
    <location>
        <position position="4059"/>
    </location>
    <ligand>
        <name>Zn(2+)</name>
        <dbReference type="ChEBI" id="CHEBI:29105"/>
        <label>3</label>
    </ligand>
</feature>
<feature type="binding site" evidence="17">
    <location>
        <position position="4066"/>
    </location>
    <ligand>
        <name>Zn(2+)</name>
        <dbReference type="ChEBI" id="CHEBI:29105"/>
        <label>3</label>
    </ligand>
</feature>
<feature type="binding site" evidence="17">
    <location>
        <position position="4092"/>
    </location>
    <ligand>
        <name>Zn(2+)</name>
        <dbReference type="ChEBI" id="CHEBI:29105"/>
        <label>4</label>
    </ligand>
</feature>
<feature type="binding site" evidence="17">
    <location>
        <position position="4095"/>
    </location>
    <ligand>
        <name>Zn(2+)</name>
        <dbReference type="ChEBI" id="CHEBI:29105"/>
        <label>4</label>
    </ligand>
</feature>
<feature type="binding site" evidence="17">
    <location>
        <position position="4103"/>
    </location>
    <ligand>
        <name>Zn(2+)</name>
        <dbReference type="ChEBI" id="CHEBI:29105"/>
        <label>4</label>
    </ligand>
</feature>
<feature type="binding site" evidence="17">
    <location>
        <position position="4105"/>
    </location>
    <ligand>
        <name>Zn(2+)</name>
        <dbReference type="ChEBI" id="CHEBI:29105"/>
        <label>4</label>
    </ligand>
</feature>
<feature type="binding site" evidence="30">
    <location>
        <position position="4401"/>
    </location>
    <ligand>
        <name>Zn(2+)</name>
        <dbReference type="ChEBI" id="CHEBI:29105"/>
        <label>5</label>
    </ligand>
</feature>
<feature type="binding site" evidence="30">
    <location>
        <position position="4407"/>
    </location>
    <ligand>
        <name>Zn(2+)</name>
        <dbReference type="ChEBI" id="CHEBI:29105"/>
        <label>5</label>
    </ligand>
</feature>
<feature type="binding site" evidence="30">
    <location>
        <position position="4412"/>
    </location>
    <ligand>
        <name>Zn(2+)</name>
        <dbReference type="ChEBI" id="CHEBI:29105"/>
        <label>5</label>
    </ligand>
</feature>
<feature type="binding site" evidence="30">
    <location>
        <position position="4416"/>
    </location>
    <ligand>
        <name>Zn(2+)</name>
        <dbReference type="ChEBI" id="CHEBI:29105"/>
        <label>5</label>
    </ligand>
</feature>
<feature type="binding site" evidence="13">
    <location>
        <position position="4593"/>
    </location>
    <ligand>
        <name>Zn(2+)</name>
        <dbReference type="ChEBI" id="CHEBI:29105"/>
        <label>6</label>
    </ligand>
</feature>
<feature type="binding site" evidence="13">
    <location>
        <position position="4748"/>
    </location>
    <ligand>
        <name>Zn(2+)</name>
        <dbReference type="ChEBI" id="CHEBI:29105"/>
        <label>6</label>
    </ligand>
</feature>
<feature type="binding site" evidence="13">
    <location>
        <position position="4751"/>
    </location>
    <ligand>
        <name>Zn(2+)</name>
        <dbReference type="ChEBI" id="CHEBI:29105"/>
        <label>6</label>
    </ligand>
</feature>
<feature type="binding site" evidence="13">
    <location>
        <position position="4752"/>
    </location>
    <ligand>
        <name>Zn(2+)</name>
        <dbReference type="ChEBI" id="CHEBI:29105"/>
        <label>6</label>
    </ligand>
</feature>
<feature type="binding site" evidence="10">
    <location>
        <position position="5043"/>
    </location>
    <ligand>
        <name>Zn(2+)</name>
        <dbReference type="ChEBI" id="CHEBI:29105"/>
        <label>7</label>
    </ligand>
</feature>
<feature type="binding site" evidence="10">
    <location>
        <position position="5046"/>
    </location>
    <ligand>
        <name>Zn(2+)</name>
        <dbReference type="ChEBI" id="CHEBI:29105"/>
        <label>7</label>
    </ligand>
</feature>
<feature type="binding site" evidence="10">
    <location>
        <position position="5054"/>
    </location>
    <ligand>
        <name>Zn(2+)</name>
        <dbReference type="ChEBI" id="CHEBI:29105"/>
        <label>8</label>
    </ligand>
</feature>
<feature type="binding site" evidence="10">
    <location>
        <position position="5057"/>
    </location>
    <ligand>
        <name>Zn(2+)</name>
        <dbReference type="ChEBI" id="CHEBI:29105"/>
        <label>8</label>
    </ligand>
</feature>
<feature type="binding site" evidence="10">
    <location>
        <position position="5064"/>
    </location>
    <ligand>
        <name>Zn(2+)</name>
        <dbReference type="ChEBI" id="CHEBI:29105"/>
        <label>7</label>
    </ligand>
</feature>
<feature type="binding site" evidence="10">
    <location>
        <position position="5067"/>
    </location>
    <ligand>
        <name>Zn(2+)</name>
        <dbReference type="ChEBI" id="CHEBI:29105"/>
        <label>7</label>
    </ligand>
</feature>
<feature type="binding site" evidence="10">
    <location>
        <position position="5071"/>
    </location>
    <ligand>
        <name>Zn(2+)</name>
        <dbReference type="ChEBI" id="CHEBI:29105"/>
        <label>8</label>
    </ligand>
</feature>
<feature type="binding site" evidence="10">
    <location>
        <position position="5077"/>
    </location>
    <ligand>
        <name>Zn(2+)</name>
        <dbReference type="ChEBI" id="CHEBI:29105"/>
        <label>8</label>
    </ligand>
</feature>
<feature type="binding site" evidence="10">
    <location>
        <position position="5088"/>
    </location>
    <ligand>
        <name>Zn(2+)</name>
        <dbReference type="ChEBI" id="CHEBI:29105"/>
        <label>9</label>
    </ligand>
</feature>
<feature type="binding site" evidence="10">
    <location>
        <position position="5093"/>
    </location>
    <ligand>
        <name>Zn(2+)</name>
        <dbReference type="ChEBI" id="CHEBI:29105"/>
        <label>9</label>
    </ligand>
</feature>
<feature type="binding site" evidence="10">
    <location>
        <position position="5110"/>
    </location>
    <ligand>
        <name>Zn(2+)</name>
        <dbReference type="ChEBI" id="CHEBI:29105"/>
        <label>9</label>
    </ligand>
</feature>
<feature type="binding site" evidence="10">
    <location>
        <position position="5113"/>
    </location>
    <ligand>
        <name>Zn(2+)</name>
        <dbReference type="ChEBI" id="CHEBI:29105"/>
        <label>9</label>
    </ligand>
</feature>
<feature type="binding site" evidence="1">
    <location>
        <begin position="5321"/>
        <end position="5328"/>
    </location>
    <ligand>
        <name>ATP</name>
        <dbReference type="ChEBI" id="CHEBI:30616"/>
    </ligand>
</feature>
<feature type="binding site" evidence="18">
    <location>
        <position position="5842"/>
    </location>
    <ligand>
        <name>Zn(2+)</name>
        <dbReference type="ChEBI" id="CHEBI:29105"/>
        <label>10</label>
    </ligand>
</feature>
<feature type="binding site" evidence="18">
    <location>
        <position position="5844"/>
    </location>
    <ligand>
        <name>Zn(2+)</name>
        <dbReference type="ChEBI" id="CHEBI:29105"/>
        <label>10</label>
    </ligand>
</feature>
<feature type="binding site" evidence="18">
    <location>
        <position position="5860"/>
    </location>
    <ligand>
        <name>Zn(2+)</name>
        <dbReference type="ChEBI" id="CHEBI:29105"/>
        <label>10</label>
    </ligand>
</feature>
<feature type="binding site" evidence="18">
    <location>
        <position position="5863"/>
    </location>
    <ligand>
        <name>Zn(2+)</name>
        <dbReference type="ChEBI" id="CHEBI:29105"/>
        <label>10</label>
    </ligand>
</feature>
<feature type="binding site" evidence="18">
    <location>
        <position position="5891"/>
    </location>
    <ligand>
        <name>Zn(2+)</name>
        <dbReference type="ChEBI" id="CHEBI:29105"/>
        <label>11</label>
    </ligand>
</feature>
<feature type="binding site" evidence="18">
    <location>
        <position position="5895"/>
    </location>
    <ligand>
        <name>Zn(2+)</name>
        <dbReference type="ChEBI" id="CHEBI:29105"/>
        <label>11</label>
    </ligand>
</feature>
<feature type="binding site" evidence="18">
    <location>
        <position position="5898"/>
    </location>
    <ligand>
        <name>Zn(2+)</name>
        <dbReference type="ChEBI" id="CHEBI:29105"/>
        <label>11</label>
    </ligand>
</feature>
<feature type="binding site" evidence="18">
    <location>
        <position position="5913"/>
    </location>
    <ligand>
        <name>Zn(2+)</name>
        <dbReference type="ChEBI" id="CHEBI:29105"/>
        <label>11</label>
    </ligand>
</feature>
<feature type="binding site" evidence="19">
    <location>
        <begin position="5965"/>
        <end position="5971"/>
    </location>
    <ligand>
        <name>S-adenosyl-L-methionine</name>
        <dbReference type="ChEBI" id="CHEBI:59789"/>
    </ligand>
</feature>
<feature type="binding site" evidence="19">
    <location>
        <position position="6080"/>
    </location>
    <ligand>
        <name>Zn(2+)</name>
        <dbReference type="ChEBI" id="CHEBI:29105"/>
        <label>12</label>
    </ligand>
</feature>
<feature type="binding site" evidence="19">
    <location>
        <position position="6097"/>
    </location>
    <ligand>
        <name>Zn(2+)</name>
        <dbReference type="ChEBI" id="CHEBI:29105"/>
        <label>12</label>
    </ligand>
</feature>
<feature type="binding site" evidence="19">
    <location>
        <position position="6108"/>
    </location>
    <ligand>
        <name>Zn(2+)</name>
        <dbReference type="ChEBI" id="CHEBI:29105"/>
        <label>12</label>
    </ligand>
</feature>
<feature type="binding site" evidence="19">
    <location>
        <position position="6111"/>
    </location>
    <ligand>
        <name>Zn(2+)</name>
        <dbReference type="ChEBI" id="CHEBI:29105"/>
        <label>12</label>
    </ligand>
</feature>
<feature type="site" description="Cleavage; by PL1-PRO" evidence="1">
    <location>
        <begin position="110"/>
        <end position="111"/>
    </location>
</feature>
<feature type="site" description="Cleavage; by PL1-PRO" evidence="1">
    <location>
        <begin position="897"/>
        <end position="898"/>
    </location>
</feature>
<feature type="site" description="Cleavage; by PL2-PRO" evidence="1">
    <location>
        <begin position="2530"/>
        <end position="2531"/>
    </location>
</feature>
<feature type="site" description="Cleavage; by 3CL-PRO" evidence="1">
    <location>
        <begin position="3012"/>
        <end position="3013"/>
    </location>
</feature>
<feature type="site" description="Cleavage; by 3CL-PRO" evidence="1">
    <location>
        <begin position="3314"/>
        <end position="3315"/>
    </location>
</feature>
<feature type="site" description="Cleavage; by 3CL-PRO" evidence="1">
    <location>
        <begin position="3590"/>
        <end position="3591"/>
    </location>
</feature>
<feature type="site" description="Cleavage; by 3CL-PRO" evidence="1">
    <location>
        <begin position="3673"/>
        <end position="3674"/>
    </location>
</feature>
<feature type="site" description="Cleavage; by 3CL-PRO" evidence="1">
    <location>
        <begin position="3868"/>
        <end position="3869"/>
    </location>
</feature>
<feature type="site" description="Cleavage; by 3CL-PRO" evidence="1">
    <location>
        <begin position="3976"/>
        <end position="3977"/>
    </location>
</feature>
<feature type="site" description="Cleavage; by 3CL-PRO" evidence="1">
    <location>
        <begin position="4111"/>
        <end position="4112"/>
    </location>
</feature>
<feature type="site" description="Cleavage; by 3CL-PRO" evidence="1">
    <location>
        <begin position="5038"/>
        <end position="5039"/>
    </location>
</feature>
<feature type="site" description="Cleavage; by 3CL-PRO" evidence="1">
    <location>
        <begin position="5557"/>
        <end position="5558"/>
    </location>
</feature>
<feature type="site" description="Cleavage; by 3CL-PRO" evidence="1">
    <location>
        <begin position="6153"/>
        <end position="6154"/>
    </location>
</feature>
<feature type="site" description="Cleavage; by 3CL-PRO" evidence="1">
    <location>
        <begin position="6492"/>
        <end position="6493"/>
    </location>
</feature>
<feature type="disulfide bond" evidence="29">
    <location>
        <begin position="2068"/>
        <end position="2094"/>
    </location>
</feature>
<feature type="disulfide bond" evidence="29">
    <location>
        <begin position="2086"/>
        <end position="2091"/>
    </location>
</feature>